<protein>
    <recommendedName>
        <fullName evidence="17">Large ribosomal subunit protein uL18</fullName>
    </recommendedName>
    <alternativeName>
        <fullName>50S ribosomal protein L18</fullName>
    </alternativeName>
</protein>
<reference key="1">
    <citation type="journal article" date="1975" name="FEBS Lett.">
        <title>The primary structure of the 5S RNA binding protein L18 from Escherichia coli ribosomes.</title>
        <authorList>
            <person name="Brosius J."/>
            <person name="Schiltz E."/>
            <person name="Chen R."/>
        </authorList>
    </citation>
    <scope>PROTEIN SEQUENCE</scope>
    <scope>SUBUNIT</scope>
    <source>
        <strain>K</strain>
    </source>
</reference>
<reference key="2">
    <citation type="journal article" date="1983" name="Nucleic Acids Res.">
        <title>The spc ribosomal protein operon of Escherichia coli: sequence and cotranscription of the ribosomal protein genes and a protein export gene.</title>
        <authorList>
            <person name="Cerretti D.P."/>
            <person name="Dean D."/>
            <person name="Davis G.R."/>
            <person name="Bedwell D.M."/>
            <person name="Nomura M."/>
        </authorList>
    </citation>
    <scope>NUCLEOTIDE SEQUENCE [GENOMIC DNA]</scope>
    <source>
        <strain>K12</strain>
    </source>
</reference>
<reference key="3">
    <citation type="journal article" date="1997" name="Science">
        <title>The complete genome sequence of Escherichia coli K-12.</title>
        <authorList>
            <person name="Blattner F.R."/>
            <person name="Plunkett G. III"/>
            <person name="Bloch C.A."/>
            <person name="Perna N.T."/>
            <person name="Burland V."/>
            <person name="Riley M."/>
            <person name="Collado-Vides J."/>
            <person name="Glasner J.D."/>
            <person name="Rode C.K."/>
            <person name="Mayhew G.F."/>
            <person name="Gregor J."/>
            <person name="Davis N.W."/>
            <person name="Kirkpatrick H.A."/>
            <person name="Goeden M.A."/>
            <person name="Rose D.J."/>
            <person name="Mau B."/>
            <person name="Shao Y."/>
        </authorList>
    </citation>
    <scope>NUCLEOTIDE SEQUENCE [LARGE SCALE GENOMIC DNA]</scope>
    <source>
        <strain>K12 / MG1655 / ATCC 47076</strain>
    </source>
</reference>
<reference key="4">
    <citation type="journal article" date="2006" name="Mol. Syst. Biol.">
        <title>Highly accurate genome sequences of Escherichia coli K-12 strains MG1655 and W3110.</title>
        <authorList>
            <person name="Hayashi K."/>
            <person name="Morooka N."/>
            <person name="Yamamoto Y."/>
            <person name="Fujita K."/>
            <person name="Isono K."/>
            <person name="Choi S."/>
            <person name="Ohtsubo E."/>
            <person name="Baba T."/>
            <person name="Wanner B.L."/>
            <person name="Mori H."/>
            <person name="Horiuchi T."/>
        </authorList>
    </citation>
    <scope>NUCLEOTIDE SEQUENCE [LARGE SCALE GENOMIC DNA]</scope>
    <source>
        <strain>K12 / W3110 / ATCC 27325 / DSM 5911</strain>
    </source>
</reference>
<reference key="5">
    <citation type="journal article" date="1978" name="Biochemistry">
        <title>Stoichiometry, cooperativity, and stability of interactions between 5S RNA and proteins L5, L18, and L25 from the 50S ribosomal subunit of Escherichia coli.</title>
        <authorList>
            <person name="Spierer P."/>
            <person name="Zimmermann R.A."/>
        </authorList>
    </citation>
    <scope>FORMATION OF THE 5S RRNA/L5/L18/L25 SUBCOMPLEX</scope>
</reference>
<reference key="6">
    <citation type="journal article" date="1978" name="Nucleic Acids Res.">
        <title>Fragment of protein L18 from the Escherichia coli ribosome that contains the 5S RNA binding site.</title>
        <authorList>
            <person name="Newberry V."/>
            <person name="Brosius J."/>
            <person name="Garrett R."/>
        </authorList>
    </citation>
    <scope>FUNCTION OF THE BASIC N-TERMINUS</scope>
</reference>
<reference key="7">
    <citation type="journal article" date="1979" name="Nucleic Acids Res.">
        <title>Cooperative interactions among protein and RNA components of the 50S ribosomal subunit of Escherichia coli.</title>
        <authorList>
            <person name="Spierer P."/>
            <person name="Wang C.-C."/>
            <person name="Marsh T.L."/>
            <person name="Zimmermann R.A."/>
        </authorList>
    </citation>
    <scope>ASSOCIATION OF 5S RRNA/L5/L18 WITH 23S RRNA</scope>
    <source>
        <strain>MRE-600</strain>
    </source>
</reference>
<reference key="8">
    <citation type="journal article" date="1980" name="Nucleic Acids Res.">
        <title>The role of the basic N-terminal region of protein L18 in 5S RNA-23S RNA complex formation.</title>
        <authorList>
            <person name="Newberry V."/>
            <person name="Garrett R.A."/>
        </authorList>
    </citation>
    <scope>REQUIREMENT OF N-TERMINUS FOR FORMATION OF 5S RRNA-23S RRNA COMPLEX</scope>
    <source>
        <strain>MRE-600</strain>
    </source>
</reference>
<reference key="9">
    <citation type="journal article" date="1982" name="Proc. Natl. Acad. Sci. U.S.A.">
        <title>Assembly map of the large subunit (50S) of Escherichia coli ribosomes.</title>
        <authorList>
            <person name="Rohl R."/>
            <person name="Nierhaus K.H."/>
        </authorList>
    </citation>
    <scope>REQUIREMENT FOR INCORPORATION OF 5S RRNA INTO THE 50S SUBUNIT</scope>
    <source>
        <strain>MRE-600</strain>
    </source>
</reference>
<reference key="10">
    <citation type="journal article" date="1996" name="FEBS Lett.">
        <title>5S rRNA sugar-phosphate backbone protection in complexes with specific ribosomal proteins.</title>
        <authorList>
            <person name="Shpanchenko O.V."/>
            <person name="Zvereva M.I."/>
            <person name="Dontsova O.A."/>
            <person name="Nierhaus K.H."/>
            <person name="Bogdanov A.A."/>
        </authorList>
    </citation>
    <scope>CHARACTERIZATION OF A 5S RRNA/L5/L18/L25 SUBCOMPLEX</scope>
    <source>
        <strain>K12 / A19</strain>
    </source>
</reference>
<reference key="11">
    <citation type="journal article" date="1999" name="Biochemistry">
        <title>Phosphorylation of ribosomal protein L18 is required for its folding and binding to 5S rRNA.</title>
        <authorList>
            <person name="Bloemink M.J."/>
            <person name="Moore P.B."/>
        </authorList>
    </citation>
    <scope>PHOSPHORYLATION</scope>
</reference>
<reference key="12">
    <citation type="journal article" date="1999" name="Anal. Biochem.">
        <title>Observation of Escherichia coli ribosomal proteins and their posttranslational modifications by mass spectrometry.</title>
        <authorList>
            <person name="Arnold R.J."/>
            <person name="Reilly J.P."/>
        </authorList>
    </citation>
    <scope>MASS SPECTROMETRY</scope>
    <scope>SUBUNIT</scope>
    <source>
        <strain>K12 / ATCC 25404 / DSM 5698 / NCIMB 11290</strain>
    </source>
</reference>
<reference key="13">
    <citation type="journal article" date="2014" name="Curr. Opin. Struct. Biol.">
        <title>A new system for naming ribosomal proteins.</title>
        <authorList>
            <person name="Ban N."/>
            <person name="Beckmann R."/>
            <person name="Cate J.H.D."/>
            <person name="Dinman J.D."/>
            <person name="Dragon F."/>
            <person name="Ellis S.R."/>
            <person name="Lafontaine D.L.J."/>
            <person name="Lindahl L."/>
            <person name="Liljas A."/>
            <person name="Lipton J.M."/>
            <person name="McAlear M.A."/>
            <person name="Moore P.B."/>
            <person name="Noller H.F."/>
            <person name="Ortega J."/>
            <person name="Panse V.G."/>
            <person name="Ramakrishnan V."/>
            <person name="Spahn C.M.T."/>
            <person name="Steitz T.A."/>
            <person name="Tchorzewski M."/>
            <person name="Tollervey D."/>
            <person name="Warren A.J."/>
            <person name="Williamson J.R."/>
            <person name="Wilson D."/>
            <person name="Yonath A."/>
            <person name="Yusupov M."/>
        </authorList>
    </citation>
    <scope>NOMENCLATURE</scope>
</reference>
<reference key="14">
    <citation type="journal article" date="2003" name="Cell">
        <title>Study of the structural dynamics of the E. coli 70S ribosome using real-space refinement.</title>
        <authorList>
            <person name="Gao H."/>
            <person name="Sengupta J."/>
            <person name="Valle M."/>
            <person name="Korostelev A."/>
            <person name="Eswar N."/>
            <person name="Stagg S.M."/>
            <person name="Van Roey P."/>
            <person name="Agrawal R.K."/>
            <person name="Harvey S.C."/>
            <person name="Sali A."/>
            <person name="Chapman M.S."/>
            <person name="Frank J."/>
        </authorList>
    </citation>
    <scope>STRUCTURE BY ELECTRON MICROSCOPY (11.50 ANGSTROMS)</scope>
    <scope>SUBUNIT</scope>
    <source>
        <strain>MRE-600</strain>
    </source>
</reference>
<reference key="15">
    <citation type="journal article" date="2005" name="Science">
        <title>Structures of the bacterial ribosome at 3.5 A resolution.</title>
        <authorList>
            <person name="Schuwirth B.S."/>
            <person name="Borovinskaya M.A."/>
            <person name="Hau C.W."/>
            <person name="Zhang W."/>
            <person name="Vila-Sanjurjo A."/>
            <person name="Holton J.M."/>
            <person name="Cate J.H.D."/>
        </authorList>
    </citation>
    <scope>X-RAY CRYSTALLOGRAPHY (3.46 ANGSTROMS) OF 2 DIFFERENT RIBOSOME STRUCTURES</scope>
    <scope>SUBUNIT</scope>
    <source>
        <strain>MRE-600</strain>
    </source>
</reference>
<reference key="16">
    <citation type="journal article" date="2014" name="Cell Rep.">
        <title>Molecular basis for the ribosome functioning as an L-tryptophan sensor.</title>
        <authorList>
            <person name="Bischoff L."/>
            <person name="Berninghausen O."/>
            <person name="Beckmann R."/>
        </authorList>
    </citation>
    <scope>STRUCTURE BY ELECTRON MICROSCOPY (3.80 ANGSTROMS) OF 2-117 IN TNAC-STALLED 50S RIBOSOMAL SUBUNIT</scope>
    <scope>SUBUNIT</scope>
    <source>
        <strain>K12 / A19 / KC6</strain>
    </source>
</reference>
<reference key="17">
    <citation type="journal article" date="2014" name="PLoS Biol.">
        <title>Structural and functional insights into the mode of action of a universally conserved Obg GTPase.</title>
        <authorList>
            <person name="Feng B."/>
            <person name="Mandava C.S."/>
            <person name="Guo Q."/>
            <person name="Wang J."/>
            <person name="Cao W."/>
            <person name="Li N."/>
            <person name="Zhang Y."/>
            <person name="Zhang Y."/>
            <person name="Wang Z."/>
            <person name="Wu J."/>
            <person name="Sanyal S."/>
            <person name="Lei J."/>
            <person name="Gao N."/>
        </authorList>
    </citation>
    <scope>STRUCTURE BY ELECTRON MICROSCOPY (5.5 ANGSTROMS) OF 2-117 OF 50S RIBOSOMAL SUBUNIT IN COMPLEX WITH OBGE AND GMP-PNP</scope>
    <scope>SUBUNIT</scope>
</reference>
<reference key="18">
    <citation type="journal article" date="2017" name="Nature">
        <title>Mechanistic insights into the alternative translation termination by ArfA and RF2.</title>
        <authorList>
            <person name="Ma C."/>
            <person name="Kurita D."/>
            <person name="Li N."/>
            <person name="Chen Y."/>
            <person name="Himeno H."/>
            <person name="Gao N."/>
        </authorList>
    </citation>
    <scope>STRUCTURE BY ELECTRON MICROSCOPY (3.0 ANGSTROMS) OF 70S RIBOSOME IN COMPLEX WITH ARFA AND RF2</scope>
    <scope>SUBUNIT</scope>
</reference>
<reference key="19">
    <citation type="journal article" date="2017" name="Nature">
        <title>Structural basis for ArfA-RF2-mediated translation termination on mRNAs lacking stop codons.</title>
        <authorList>
            <person name="Huter P."/>
            <person name="Mueller C."/>
            <person name="Beckert B."/>
            <person name="Arenz S."/>
            <person name="Berninghausen O."/>
            <person name="Beckmann R."/>
            <person name="Wilson D.N."/>
        </authorList>
    </citation>
    <scope>STRUCTURE BY ELECTRON MICROSCOPY (3.1 ANGSTROMS) OF 70S RIBOSOME IN COMPLEX WITH ARFA AND RF2</scope>
    <scope>SUBUNIT</scope>
</reference>
<reference key="20">
    <citation type="journal article" date="2016" name="Science">
        <title>Translational termination without a stop codon.</title>
        <authorList>
            <person name="James N.R."/>
            <person name="Brown A."/>
            <person name="Gordiyenko Y."/>
            <person name="Ramakrishnan V."/>
        </authorList>
    </citation>
    <scope>STRUCTURE BY ELECTRON MICROSCOPY (2.97 ANGSTROMS) OF 70S RIBOSOME IN COMPLEX WITH ARFA AND RF2</scope>
    <scope>SUBUNIT</scope>
</reference>
<reference key="21">
    <citation type="journal article" date="2017" name="Nature">
        <title>Structural basis of co-translational quality control by ArfA and RF2 bound to ribosome.</title>
        <authorList>
            <person name="Zeng F."/>
            <person name="Chen Y."/>
            <person name="Remis J."/>
            <person name="Shekhar M."/>
            <person name="Phillips J.C."/>
            <person name="Tajkhorshid E."/>
            <person name="Jin H."/>
        </authorList>
    </citation>
    <scope>STRUCTURE BY ELECTRON MICROSCOPY (3.52 ANGSTROMS) OF 70S RIBOSOME IN COMPLEX WITH ARFA AND RF2</scope>
    <scope>SUBUNIT</scope>
</reference>
<evidence type="ECO:0000269" key="1">
    <source>
    </source>
</evidence>
<evidence type="ECO:0000269" key="2">
    <source>
    </source>
</evidence>
<evidence type="ECO:0000269" key="3">
    <source>
    </source>
</evidence>
<evidence type="ECO:0000269" key="4">
    <source>
    </source>
</evidence>
<evidence type="ECO:0000269" key="5">
    <source>
    </source>
</evidence>
<evidence type="ECO:0000269" key="6">
    <source>
    </source>
</evidence>
<evidence type="ECO:0000269" key="7">
    <source>
    </source>
</evidence>
<evidence type="ECO:0000269" key="8">
    <source>
    </source>
</evidence>
<evidence type="ECO:0000269" key="9">
    <source>
    </source>
</evidence>
<evidence type="ECO:0000269" key="10">
    <source>
    </source>
</evidence>
<evidence type="ECO:0000269" key="11">
    <source>
    </source>
</evidence>
<evidence type="ECO:0000269" key="12">
    <source>
    </source>
</evidence>
<evidence type="ECO:0000269" key="13">
    <source>
    </source>
</evidence>
<evidence type="ECO:0000269" key="14">
    <source>
    </source>
</evidence>
<evidence type="ECO:0000269" key="15">
    <source>
    </source>
</evidence>
<evidence type="ECO:0000269" key="16">
    <source>
    </source>
</evidence>
<evidence type="ECO:0000303" key="17">
    <source>
    </source>
</evidence>
<evidence type="ECO:0000305" key="18"/>
<evidence type="ECO:0007829" key="19">
    <source>
        <dbReference type="PDB" id="6QDW"/>
    </source>
</evidence>
<evidence type="ECO:0007829" key="20">
    <source>
        <dbReference type="PDB" id="8ANA"/>
    </source>
</evidence>
<evidence type="ECO:0007829" key="21">
    <source>
        <dbReference type="PDB" id="8CEU"/>
    </source>
</evidence>
<evidence type="ECO:0007829" key="22">
    <source>
        <dbReference type="PDB" id="8CGV"/>
    </source>
</evidence>
<feature type="chain" id="PRO_0000131258" description="Large ribosomal subunit protein uL18">
    <location>
        <begin position="1"/>
        <end position="117"/>
    </location>
</feature>
<feature type="region of interest" description="Required for binding of the 5S rRNA/L5/L18 complex to the 23S rRNA" evidence="12">
    <location>
        <begin position="1"/>
        <end position="17"/>
    </location>
</feature>
<feature type="helix" evidence="22">
    <location>
        <begin position="4"/>
        <end position="21"/>
    </location>
</feature>
<feature type="strand" evidence="21">
    <location>
        <begin position="25"/>
        <end position="30"/>
    </location>
</feature>
<feature type="strand" evidence="21">
    <location>
        <begin position="35"/>
        <end position="40"/>
    </location>
</feature>
<feature type="strand" evidence="19">
    <location>
        <begin position="42"/>
        <end position="45"/>
    </location>
</feature>
<feature type="strand" evidence="21">
    <location>
        <begin position="47"/>
        <end position="55"/>
    </location>
</feature>
<feature type="helix" evidence="21">
    <location>
        <begin position="56"/>
        <end position="59"/>
    </location>
</feature>
<feature type="strand" evidence="20">
    <location>
        <begin position="65"/>
        <end position="67"/>
    </location>
</feature>
<feature type="helix" evidence="21">
    <location>
        <begin position="68"/>
        <end position="85"/>
    </location>
</feature>
<feature type="strand" evidence="21">
    <location>
        <begin position="91"/>
        <end position="93"/>
    </location>
</feature>
<feature type="helix" evidence="21">
    <location>
        <begin position="101"/>
        <end position="113"/>
    </location>
</feature>
<keyword id="KW-0002">3D-structure</keyword>
<keyword id="KW-0903">Direct protein sequencing</keyword>
<keyword id="KW-0597">Phosphoprotein</keyword>
<keyword id="KW-1185">Reference proteome</keyword>
<keyword id="KW-0687">Ribonucleoprotein</keyword>
<keyword id="KW-0689">Ribosomal protein</keyword>
<keyword id="KW-0694">RNA-binding</keyword>
<keyword id="KW-0699">rRNA-binding</keyword>
<dbReference type="EMBL" id="X01563">
    <property type="protein sequence ID" value="CAA25721.1"/>
    <property type="molecule type" value="Genomic_DNA"/>
</dbReference>
<dbReference type="EMBL" id="U18997">
    <property type="protein sequence ID" value="AAA58101.1"/>
    <property type="molecule type" value="Genomic_DNA"/>
</dbReference>
<dbReference type="EMBL" id="U00096">
    <property type="protein sequence ID" value="AAC76329.1"/>
    <property type="molecule type" value="Genomic_DNA"/>
</dbReference>
<dbReference type="EMBL" id="AP009048">
    <property type="protein sequence ID" value="BAE77987.1"/>
    <property type="molecule type" value="Genomic_DNA"/>
</dbReference>
<dbReference type="PIR" id="A02803">
    <property type="entry name" value="R5EC18"/>
</dbReference>
<dbReference type="RefSeq" id="NP_417763.1">
    <property type="nucleotide sequence ID" value="NC_000913.3"/>
</dbReference>
<dbReference type="RefSeq" id="WP_000358960.1">
    <property type="nucleotide sequence ID" value="NZ_STEB01000038.1"/>
</dbReference>
<dbReference type="PDB" id="1ML5">
    <property type="method" value="EM"/>
    <property type="resolution" value="14.00 A"/>
    <property type="chains" value="q=2-117"/>
</dbReference>
<dbReference type="PDB" id="2J28">
    <property type="method" value="EM"/>
    <property type="resolution" value="8.00 A"/>
    <property type="chains" value="O=1-117"/>
</dbReference>
<dbReference type="PDB" id="2RDO">
    <property type="method" value="EM"/>
    <property type="resolution" value="9.10 A"/>
    <property type="chains" value="O=1-117"/>
</dbReference>
<dbReference type="PDB" id="3BBX">
    <property type="method" value="EM"/>
    <property type="resolution" value="10.00 A"/>
    <property type="chains" value="O=1-117"/>
</dbReference>
<dbReference type="PDB" id="3J5L">
    <property type="method" value="EM"/>
    <property type="resolution" value="6.60 A"/>
    <property type="chains" value="O=2-117"/>
</dbReference>
<dbReference type="PDB" id="3J7Z">
    <property type="method" value="EM"/>
    <property type="resolution" value="3.90 A"/>
    <property type="chains" value="O=1-117"/>
</dbReference>
<dbReference type="PDB" id="3J8G">
    <property type="method" value="EM"/>
    <property type="resolution" value="5.00 A"/>
    <property type="chains" value="O=1-117"/>
</dbReference>
<dbReference type="PDB" id="3J9Y">
    <property type="method" value="EM"/>
    <property type="resolution" value="3.90 A"/>
    <property type="chains" value="O=1-117"/>
</dbReference>
<dbReference type="PDB" id="3J9Z">
    <property type="method" value="EM"/>
    <property type="resolution" value="3.60 A"/>
    <property type="chains" value="LK=1-117"/>
</dbReference>
<dbReference type="PDB" id="3JA1">
    <property type="method" value="EM"/>
    <property type="resolution" value="3.60 A"/>
    <property type="chains" value="LQ=1-117"/>
</dbReference>
<dbReference type="PDB" id="3JBU">
    <property type="method" value="EM"/>
    <property type="resolution" value="3.64 A"/>
    <property type="chains" value="o=1-117"/>
</dbReference>
<dbReference type="PDB" id="3JBV">
    <property type="method" value="EM"/>
    <property type="resolution" value="3.32 A"/>
    <property type="chains" value="o=1-117"/>
</dbReference>
<dbReference type="PDB" id="3JCD">
    <property type="method" value="EM"/>
    <property type="resolution" value="3.70 A"/>
    <property type="chains" value="O=1-117"/>
</dbReference>
<dbReference type="PDB" id="3JCE">
    <property type="method" value="EM"/>
    <property type="resolution" value="3.20 A"/>
    <property type="chains" value="O=1-117"/>
</dbReference>
<dbReference type="PDB" id="3JCJ">
    <property type="method" value="EM"/>
    <property type="resolution" value="3.70 A"/>
    <property type="chains" value="N=1-117"/>
</dbReference>
<dbReference type="PDB" id="3JCN">
    <property type="method" value="EM"/>
    <property type="resolution" value="4.60 A"/>
    <property type="chains" value="O=1-117"/>
</dbReference>
<dbReference type="PDB" id="4CSU">
    <property type="method" value="EM"/>
    <property type="resolution" value="5.50 A"/>
    <property type="chains" value="O=2-117"/>
</dbReference>
<dbReference type="PDB" id="4U1U">
    <property type="method" value="X-ray"/>
    <property type="resolution" value="2.95 A"/>
    <property type="chains" value="BO/DO=2-117"/>
</dbReference>
<dbReference type="PDB" id="4U1V">
    <property type="method" value="X-ray"/>
    <property type="resolution" value="3.00 A"/>
    <property type="chains" value="BO/DO=2-117"/>
</dbReference>
<dbReference type="PDB" id="4U20">
    <property type="method" value="X-ray"/>
    <property type="resolution" value="2.90 A"/>
    <property type="chains" value="BO/DO=2-117"/>
</dbReference>
<dbReference type="PDB" id="4U24">
    <property type="method" value="X-ray"/>
    <property type="resolution" value="2.90 A"/>
    <property type="chains" value="BO/DO=2-117"/>
</dbReference>
<dbReference type="PDB" id="4U25">
    <property type="method" value="X-ray"/>
    <property type="resolution" value="2.90 A"/>
    <property type="chains" value="BO/DO=2-117"/>
</dbReference>
<dbReference type="PDB" id="4U26">
    <property type="method" value="X-ray"/>
    <property type="resolution" value="2.80 A"/>
    <property type="chains" value="BO/DO=2-117"/>
</dbReference>
<dbReference type="PDB" id="4U27">
    <property type="method" value="X-ray"/>
    <property type="resolution" value="2.80 A"/>
    <property type="chains" value="BO/DO=2-117"/>
</dbReference>
<dbReference type="PDB" id="4UY8">
    <property type="method" value="EM"/>
    <property type="resolution" value="3.80 A"/>
    <property type="chains" value="O=2-117"/>
</dbReference>
<dbReference type="PDB" id="4V47">
    <property type="method" value="EM"/>
    <property type="resolution" value="12.30 A"/>
    <property type="chains" value="AM=1-117"/>
</dbReference>
<dbReference type="PDB" id="4V48">
    <property type="method" value="EM"/>
    <property type="resolution" value="11.50 A"/>
    <property type="chains" value="AM=1-117"/>
</dbReference>
<dbReference type="PDB" id="4V4H">
    <property type="method" value="X-ray"/>
    <property type="resolution" value="3.46 A"/>
    <property type="chains" value="BO/DO=1-117"/>
</dbReference>
<dbReference type="PDB" id="4V4Q">
    <property type="method" value="X-ray"/>
    <property type="resolution" value="3.46 A"/>
    <property type="chains" value="BO/DO=1-117"/>
</dbReference>
<dbReference type="PDB" id="4V4V">
    <property type="method" value="EM"/>
    <property type="resolution" value="15.00 A"/>
    <property type="chains" value="BM=3-115"/>
</dbReference>
<dbReference type="PDB" id="4V4W">
    <property type="method" value="EM"/>
    <property type="resolution" value="15.00 A"/>
    <property type="chains" value="BM=3-115"/>
</dbReference>
<dbReference type="PDB" id="4V50">
    <property type="method" value="X-ray"/>
    <property type="resolution" value="3.22 A"/>
    <property type="chains" value="BO/DO=1-117"/>
</dbReference>
<dbReference type="PDB" id="4V52">
    <property type="method" value="X-ray"/>
    <property type="resolution" value="3.21 A"/>
    <property type="chains" value="BO/DO=1-117"/>
</dbReference>
<dbReference type="PDB" id="4V53">
    <property type="method" value="X-ray"/>
    <property type="resolution" value="3.54 A"/>
    <property type="chains" value="BO/DO=1-117"/>
</dbReference>
<dbReference type="PDB" id="4V54">
    <property type="method" value="X-ray"/>
    <property type="resolution" value="3.30 A"/>
    <property type="chains" value="BO/DO=1-117"/>
</dbReference>
<dbReference type="PDB" id="4V55">
    <property type="method" value="X-ray"/>
    <property type="resolution" value="4.00 A"/>
    <property type="chains" value="BO/DO=1-117"/>
</dbReference>
<dbReference type="PDB" id="4V56">
    <property type="method" value="X-ray"/>
    <property type="resolution" value="3.93 A"/>
    <property type="chains" value="BO/DO=1-117"/>
</dbReference>
<dbReference type="PDB" id="4V57">
    <property type="method" value="X-ray"/>
    <property type="resolution" value="3.50 A"/>
    <property type="chains" value="BO/DO=1-117"/>
</dbReference>
<dbReference type="PDB" id="4V5B">
    <property type="method" value="X-ray"/>
    <property type="resolution" value="3.74 A"/>
    <property type="chains" value="AO/CO=1-117"/>
</dbReference>
<dbReference type="PDB" id="4V5H">
    <property type="method" value="EM"/>
    <property type="resolution" value="5.80 A"/>
    <property type="chains" value="BO=2-117"/>
</dbReference>
<dbReference type="PDB" id="4V5Y">
    <property type="method" value="X-ray"/>
    <property type="resolution" value="4.45 A"/>
    <property type="chains" value="BO/DO=1-117"/>
</dbReference>
<dbReference type="PDB" id="4V64">
    <property type="method" value="X-ray"/>
    <property type="resolution" value="3.50 A"/>
    <property type="chains" value="BO/DO=1-117"/>
</dbReference>
<dbReference type="PDB" id="4V65">
    <property type="method" value="EM"/>
    <property type="resolution" value="9.00 A"/>
    <property type="chains" value="BH=1-117"/>
</dbReference>
<dbReference type="PDB" id="4V66">
    <property type="method" value="EM"/>
    <property type="resolution" value="9.00 A"/>
    <property type="chains" value="BH=1-117"/>
</dbReference>
<dbReference type="PDB" id="4V69">
    <property type="method" value="EM"/>
    <property type="resolution" value="6.70 A"/>
    <property type="chains" value="BO=2-117"/>
</dbReference>
<dbReference type="PDB" id="4V6C">
    <property type="method" value="X-ray"/>
    <property type="resolution" value="3.19 A"/>
    <property type="chains" value="BO/DO=1-117"/>
</dbReference>
<dbReference type="PDB" id="4V6D">
    <property type="method" value="X-ray"/>
    <property type="resolution" value="3.81 A"/>
    <property type="chains" value="BO/DO=1-117"/>
</dbReference>
<dbReference type="PDB" id="4V6E">
    <property type="method" value="X-ray"/>
    <property type="resolution" value="3.71 A"/>
    <property type="chains" value="BO/DO=1-117"/>
</dbReference>
<dbReference type="PDB" id="4V6K">
    <property type="method" value="EM"/>
    <property type="resolution" value="8.25 A"/>
    <property type="chains" value="AP=1-117"/>
</dbReference>
<dbReference type="PDB" id="4V6L">
    <property type="method" value="EM"/>
    <property type="resolution" value="13.20 A"/>
    <property type="chains" value="BP=1-117"/>
</dbReference>
<dbReference type="PDB" id="4V6M">
    <property type="method" value="EM"/>
    <property type="resolution" value="7.10 A"/>
    <property type="chains" value="BO=1-117"/>
</dbReference>
<dbReference type="PDB" id="4V6N">
    <property type="method" value="EM"/>
    <property type="resolution" value="12.10 A"/>
    <property type="chains" value="AQ=1-117"/>
</dbReference>
<dbReference type="PDB" id="4V6O">
    <property type="method" value="EM"/>
    <property type="resolution" value="14.70 A"/>
    <property type="chains" value="BQ=1-117"/>
</dbReference>
<dbReference type="PDB" id="4V6P">
    <property type="method" value="EM"/>
    <property type="resolution" value="13.50 A"/>
    <property type="chains" value="BQ=1-117"/>
</dbReference>
<dbReference type="PDB" id="4V6Q">
    <property type="method" value="EM"/>
    <property type="resolution" value="11.50 A"/>
    <property type="chains" value="BQ=1-117"/>
</dbReference>
<dbReference type="PDB" id="4V6R">
    <property type="method" value="EM"/>
    <property type="resolution" value="11.50 A"/>
    <property type="chains" value="BQ=1-117"/>
</dbReference>
<dbReference type="PDB" id="4V6S">
    <property type="method" value="EM"/>
    <property type="resolution" value="13.10 A"/>
    <property type="chains" value="AQ=1-117"/>
</dbReference>
<dbReference type="PDB" id="4V6T">
    <property type="method" value="EM"/>
    <property type="resolution" value="8.30 A"/>
    <property type="chains" value="BO=2-117"/>
</dbReference>
<dbReference type="PDB" id="4V6V">
    <property type="method" value="EM"/>
    <property type="resolution" value="9.80 A"/>
    <property type="chains" value="BS=1-117"/>
</dbReference>
<dbReference type="PDB" id="4V6Y">
    <property type="method" value="EM"/>
    <property type="resolution" value="12.00 A"/>
    <property type="chains" value="BO=1-117"/>
</dbReference>
<dbReference type="PDB" id="4V6Z">
    <property type="method" value="EM"/>
    <property type="resolution" value="12.00 A"/>
    <property type="chains" value="BO=1-117"/>
</dbReference>
<dbReference type="PDB" id="4V70">
    <property type="method" value="EM"/>
    <property type="resolution" value="17.00 A"/>
    <property type="chains" value="BO=1-117"/>
</dbReference>
<dbReference type="PDB" id="4V71">
    <property type="method" value="EM"/>
    <property type="resolution" value="20.00 A"/>
    <property type="chains" value="BO=1-117"/>
</dbReference>
<dbReference type="PDB" id="4V72">
    <property type="method" value="EM"/>
    <property type="resolution" value="13.00 A"/>
    <property type="chains" value="BO=1-117"/>
</dbReference>
<dbReference type="PDB" id="4V73">
    <property type="method" value="EM"/>
    <property type="resolution" value="15.00 A"/>
    <property type="chains" value="BO=1-117"/>
</dbReference>
<dbReference type="PDB" id="4V74">
    <property type="method" value="EM"/>
    <property type="resolution" value="17.00 A"/>
    <property type="chains" value="BO=1-117"/>
</dbReference>
<dbReference type="PDB" id="4V75">
    <property type="method" value="EM"/>
    <property type="resolution" value="12.00 A"/>
    <property type="chains" value="BO=1-117"/>
</dbReference>
<dbReference type="PDB" id="4V76">
    <property type="method" value="EM"/>
    <property type="resolution" value="17.00 A"/>
    <property type="chains" value="BO=1-117"/>
</dbReference>
<dbReference type="PDB" id="4V77">
    <property type="method" value="EM"/>
    <property type="resolution" value="17.00 A"/>
    <property type="chains" value="BO=1-117"/>
</dbReference>
<dbReference type="PDB" id="4V78">
    <property type="method" value="EM"/>
    <property type="resolution" value="20.00 A"/>
    <property type="chains" value="BO=1-117"/>
</dbReference>
<dbReference type="PDB" id="4V79">
    <property type="method" value="EM"/>
    <property type="resolution" value="15.00 A"/>
    <property type="chains" value="BO=1-117"/>
</dbReference>
<dbReference type="PDB" id="4V7A">
    <property type="method" value="EM"/>
    <property type="resolution" value="9.00 A"/>
    <property type="chains" value="BO=1-117"/>
</dbReference>
<dbReference type="PDB" id="4V7B">
    <property type="method" value="EM"/>
    <property type="resolution" value="6.80 A"/>
    <property type="chains" value="BO=1-117"/>
</dbReference>
<dbReference type="PDB" id="4V7C">
    <property type="method" value="EM"/>
    <property type="resolution" value="7.60 A"/>
    <property type="chains" value="BQ=1-117"/>
</dbReference>
<dbReference type="PDB" id="4V7D">
    <property type="method" value="EM"/>
    <property type="resolution" value="7.60 A"/>
    <property type="chains" value="AR=1-117"/>
</dbReference>
<dbReference type="PDB" id="4V7I">
    <property type="method" value="EM"/>
    <property type="resolution" value="9.60 A"/>
    <property type="chains" value="AO=1-117"/>
</dbReference>
<dbReference type="PDB" id="4V7S">
    <property type="method" value="X-ray"/>
    <property type="resolution" value="3.25 A"/>
    <property type="chains" value="BO/DO=2-117"/>
</dbReference>
<dbReference type="PDB" id="4V7T">
    <property type="method" value="X-ray"/>
    <property type="resolution" value="3.19 A"/>
    <property type="chains" value="BO/DO=2-117"/>
</dbReference>
<dbReference type="PDB" id="4V7U">
    <property type="method" value="X-ray"/>
    <property type="resolution" value="3.10 A"/>
    <property type="chains" value="BO/DO=2-117"/>
</dbReference>
<dbReference type="PDB" id="4V7V">
    <property type="method" value="X-ray"/>
    <property type="resolution" value="3.29 A"/>
    <property type="chains" value="BO/DO=2-117"/>
</dbReference>
<dbReference type="PDB" id="4V85">
    <property type="method" value="X-ray"/>
    <property type="resolution" value="3.20 A"/>
    <property type="chains" value="BS=1-117"/>
</dbReference>
<dbReference type="PDB" id="4V89">
    <property type="method" value="X-ray"/>
    <property type="resolution" value="3.70 A"/>
    <property type="chains" value="BS=1-117"/>
</dbReference>
<dbReference type="PDB" id="4V9C">
    <property type="method" value="X-ray"/>
    <property type="resolution" value="3.30 A"/>
    <property type="chains" value="BO/DO=1-117"/>
</dbReference>
<dbReference type="PDB" id="4V9D">
    <property type="method" value="X-ray"/>
    <property type="resolution" value="3.00 A"/>
    <property type="chains" value="CO/DO=2-117"/>
</dbReference>
<dbReference type="PDB" id="4V9O">
    <property type="method" value="X-ray"/>
    <property type="resolution" value="2.90 A"/>
    <property type="chains" value="AO/CO/EO/GO=1-117"/>
</dbReference>
<dbReference type="PDB" id="4V9P">
    <property type="method" value="X-ray"/>
    <property type="resolution" value="2.90 A"/>
    <property type="chains" value="AO/CO/EO/GO=1-117"/>
</dbReference>
<dbReference type="PDB" id="4WF1">
    <property type="method" value="X-ray"/>
    <property type="resolution" value="3.09 A"/>
    <property type="chains" value="BO/DO=2-117"/>
</dbReference>
<dbReference type="PDB" id="4WOI">
    <property type="method" value="X-ray"/>
    <property type="resolution" value="3.00 A"/>
    <property type="chains" value="BO/CO=1-117"/>
</dbReference>
<dbReference type="PDB" id="4WWW">
    <property type="method" value="X-ray"/>
    <property type="resolution" value="3.10 A"/>
    <property type="chains" value="RO/YO=2-117"/>
</dbReference>
<dbReference type="PDB" id="4YBB">
    <property type="method" value="X-ray"/>
    <property type="resolution" value="2.10 A"/>
    <property type="chains" value="CP/DP=1-117"/>
</dbReference>
<dbReference type="PDB" id="5ADY">
    <property type="method" value="EM"/>
    <property type="resolution" value="4.50 A"/>
    <property type="chains" value="O=1-117"/>
</dbReference>
<dbReference type="PDB" id="5AFI">
    <property type="method" value="EM"/>
    <property type="resolution" value="2.90 A"/>
    <property type="chains" value="O=1-117"/>
</dbReference>
<dbReference type="PDB" id="5AKA">
    <property type="method" value="EM"/>
    <property type="resolution" value="5.70 A"/>
    <property type="chains" value="O=1-117"/>
</dbReference>
<dbReference type="PDB" id="5GAD">
    <property type="method" value="EM"/>
    <property type="resolution" value="3.70 A"/>
    <property type="chains" value="P=1-117"/>
</dbReference>
<dbReference type="PDB" id="5GAE">
    <property type="method" value="EM"/>
    <property type="resolution" value="3.33 A"/>
    <property type="chains" value="P=1-117"/>
</dbReference>
<dbReference type="PDB" id="5GAF">
    <property type="method" value="EM"/>
    <property type="resolution" value="4.30 A"/>
    <property type="chains" value="P=1-117"/>
</dbReference>
<dbReference type="PDB" id="5GAG">
    <property type="method" value="EM"/>
    <property type="resolution" value="3.80 A"/>
    <property type="chains" value="P=1-117"/>
</dbReference>
<dbReference type="PDB" id="5GAH">
    <property type="method" value="EM"/>
    <property type="resolution" value="3.80 A"/>
    <property type="chains" value="P=1-117"/>
</dbReference>
<dbReference type="PDB" id="5H5U">
    <property type="method" value="EM"/>
    <property type="resolution" value="3.00 A"/>
    <property type="chains" value="P=1-117"/>
</dbReference>
<dbReference type="PDB" id="5IQR">
    <property type="method" value="EM"/>
    <property type="resolution" value="3.00 A"/>
    <property type="chains" value="O=1-117"/>
</dbReference>
<dbReference type="PDB" id="5IT8">
    <property type="method" value="X-ray"/>
    <property type="resolution" value="3.12 A"/>
    <property type="chains" value="CP/DP=1-117"/>
</dbReference>
<dbReference type="PDB" id="5J5B">
    <property type="method" value="X-ray"/>
    <property type="resolution" value="2.80 A"/>
    <property type="chains" value="CP/DP=1-117"/>
</dbReference>
<dbReference type="PDB" id="5J7L">
    <property type="method" value="X-ray"/>
    <property type="resolution" value="3.00 A"/>
    <property type="chains" value="CP/DP=1-117"/>
</dbReference>
<dbReference type="PDB" id="5J88">
    <property type="method" value="X-ray"/>
    <property type="resolution" value="3.32 A"/>
    <property type="chains" value="CP/DP=1-117"/>
</dbReference>
<dbReference type="PDB" id="5J8A">
    <property type="method" value="X-ray"/>
    <property type="resolution" value="3.10 A"/>
    <property type="chains" value="CP/DP=1-117"/>
</dbReference>
<dbReference type="PDB" id="5J91">
    <property type="method" value="X-ray"/>
    <property type="resolution" value="2.96 A"/>
    <property type="chains" value="CP/DP=1-117"/>
</dbReference>
<dbReference type="PDB" id="5JC9">
    <property type="method" value="X-ray"/>
    <property type="resolution" value="3.03 A"/>
    <property type="chains" value="CP/DP=1-117"/>
</dbReference>
<dbReference type="PDB" id="5JTE">
    <property type="method" value="EM"/>
    <property type="resolution" value="3.60 A"/>
    <property type="chains" value="BO=1-117"/>
</dbReference>
<dbReference type="PDB" id="5JU8">
    <property type="method" value="EM"/>
    <property type="resolution" value="3.60 A"/>
    <property type="chains" value="BO=1-117"/>
</dbReference>
<dbReference type="PDB" id="5KCR">
    <property type="method" value="EM"/>
    <property type="resolution" value="3.60 A"/>
    <property type="chains" value="1S=1-117"/>
</dbReference>
<dbReference type="PDB" id="5KCS">
    <property type="method" value="EM"/>
    <property type="resolution" value="3.90 A"/>
    <property type="chains" value="1S=1-117"/>
</dbReference>
<dbReference type="PDB" id="5KPS">
    <property type="method" value="EM"/>
    <property type="resolution" value="3.90 A"/>
    <property type="chains" value="O=1-117"/>
</dbReference>
<dbReference type="PDB" id="5KPV">
    <property type="method" value="EM"/>
    <property type="resolution" value="4.10 A"/>
    <property type="chains" value="N=1-117"/>
</dbReference>
<dbReference type="PDB" id="5KPW">
    <property type="method" value="EM"/>
    <property type="resolution" value="3.90 A"/>
    <property type="chains" value="N=1-117"/>
</dbReference>
<dbReference type="PDB" id="5KPX">
    <property type="method" value="EM"/>
    <property type="resolution" value="3.90 A"/>
    <property type="chains" value="N=1-117"/>
</dbReference>
<dbReference type="PDB" id="5L3P">
    <property type="method" value="EM"/>
    <property type="resolution" value="3.70 A"/>
    <property type="chains" value="S=1-117"/>
</dbReference>
<dbReference type="PDB" id="5LZA">
    <property type="method" value="EM"/>
    <property type="resolution" value="3.60 A"/>
    <property type="chains" value="O=2-117"/>
</dbReference>
<dbReference type="PDB" id="5LZB">
    <property type="method" value="EM"/>
    <property type="resolution" value="5.30 A"/>
    <property type="chains" value="O=2-117"/>
</dbReference>
<dbReference type="PDB" id="5LZC">
    <property type="method" value="EM"/>
    <property type="resolution" value="4.80 A"/>
    <property type="chains" value="O=2-117"/>
</dbReference>
<dbReference type="PDB" id="5LZD">
    <property type="method" value="EM"/>
    <property type="resolution" value="3.40 A"/>
    <property type="chains" value="O=2-117"/>
</dbReference>
<dbReference type="PDB" id="5LZE">
    <property type="method" value="EM"/>
    <property type="resolution" value="3.50 A"/>
    <property type="chains" value="O=2-117"/>
</dbReference>
<dbReference type="PDB" id="5LZF">
    <property type="method" value="EM"/>
    <property type="resolution" value="4.60 A"/>
    <property type="chains" value="O=2-117"/>
</dbReference>
<dbReference type="PDB" id="5MDV">
    <property type="method" value="EM"/>
    <property type="resolution" value="2.97 A"/>
    <property type="chains" value="O=1-117"/>
</dbReference>
<dbReference type="PDB" id="5MDW">
    <property type="method" value="EM"/>
    <property type="resolution" value="3.06 A"/>
    <property type="chains" value="O=1-117"/>
</dbReference>
<dbReference type="PDB" id="5MDY">
    <property type="method" value="EM"/>
    <property type="resolution" value="3.35 A"/>
    <property type="chains" value="O=1-117"/>
</dbReference>
<dbReference type="PDB" id="5MDZ">
    <property type="method" value="EM"/>
    <property type="resolution" value="3.10 A"/>
    <property type="chains" value="O=1-117"/>
</dbReference>
<dbReference type="PDB" id="5MGP">
    <property type="method" value="EM"/>
    <property type="resolution" value="3.10 A"/>
    <property type="chains" value="O=2-117"/>
</dbReference>
<dbReference type="PDB" id="5NCO">
    <property type="method" value="EM"/>
    <property type="resolution" value="4.80 A"/>
    <property type="chains" value="P=1-117"/>
</dbReference>
<dbReference type="PDB" id="5NP6">
    <property type="method" value="EM"/>
    <property type="resolution" value="3.60 A"/>
    <property type="chains" value="m=2-117"/>
</dbReference>
<dbReference type="PDB" id="5NWY">
    <property type="method" value="EM"/>
    <property type="resolution" value="2.93 A"/>
    <property type="chains" value="b=1-117"/>
</dbReference>
<dbReference type="PDB" id="5O2R">
    <property type="method" value="EM"/>
    <property type="resolution" value="3.40 A"/>
    <property type="chains" value="O=2-117"/>
</dbReference>
<dbReference type="PDB" id="5U4I">
    <property type="method" value="EM"/>
    <property type="resolution" value="3.50 A"/>
    <property type="chains" value="P=1-117"/>
</dbReference>
<dbReference type="PDB" id="5U9F">
    <property type="method" value="EM"/>
    <property type="resolution" value="3.20 A"/>
    <property type="chains" value="17=1-117"/>
</dbReference>
<dbReference type="PDB" id="5U9G">
    <property type="method" value="EM"/>
    <property type="resolution" value="3.20 A"/>
    <property type="chains" value="17=1-117"/>
</dbReference>
<dbReference type="PDB" id="5UYK">
    <property type="method" value="EM"/>
    <property type="resolution" value="3.90 A"/>
    <property type="chains" value="17=2-117"/>
</dbReference>
<dbReference type="PDB" id="5UYL">
    <property type="method" value="EM"/>
    <property type="resolution" value="3.60 A"/>
    <property type="chains" value="17=2-117"/>
</dbReference>
<dbReference type="PDB" id="5UYM">
    <property type="method" value="EM"/>
    <property type="resolution" value="3.20 A"/>
    <property type="chains" value="17=2-117"/>
</dbReference>
<dbReference type="PDB" id="5UYN">
    <property type="method" value="EM"/>
    <property type="resolution" value="4.00 A"/>
    <property type="chains" value="17=2-117"/>
</dbReference>
<dbReference type="PDB" id="5UYP">
    <property type="method" value="EM"/>
    <property type="resolution" value="3.90 A"/>
    <property type="chains" value="17=2-117"/>
</dbReference>
<dbReference type="PDB" id="5UYQ">
    <property type="method" value="EM"/>
    <property type="resolution" value="3.80 A"/>
    <property type="chains" value="17=2-117"/>
</dbReference>
<dbReference type="PDB" id="5WDT">
    <property type="method" value="EM"/>
    <property type="resolution" value="3.00 A"/>
    <property type="chains" value="O=2-117"/>
</dbReference>
<dbReference type="PDB" id="5WE4">
    <property type="method" value="EM"/>
    <property type="resolution" value="3.10 A"/>
    <property type="chains" value="O=2-117"/>
</dbReference>
<dbReference type="PDB" id="5WE6">
    <property type="method" value="EM"/>
    <property type="resolution" value="3.40 A"/>
    <property type="chains" value="O=2-117"/>
</dbReference>
<dbReference type="PDB" id="5WF0">
    <property type="method" value="EM"/>
    <property type="resolution" value="3.60 A"/>
    <property type="chains" value="O=2-117"/>
</dbReference>
<dbReference type="PDB" id="5WFK">
    <property type="method" value="EM"/>
    <property type="resolution" value="3.40 A"/>
    <property type="chains" value="O=2-117"/>
</dbReference>
<dbReference type="PDB" id="5WFS">
    <property type="method" value="EM"/>
    <property type="resolution" value="3.00 A"/>
    <property type="chains" value="O=2-117"/>
</dbReference>
<dbReference type="PDB" id="6BU8">
    <property type="method" value="EM"/>
    <property type="resolution" value="3.50 A"/>
    <property type="chains" value="17=2-117"/>
</dbReference>
<dbReference type="PDB" id="6BY1">
    <property type="method" value="X-ray"/>
    <property type="resolution" value="3.94 A"/>
    <property type="chains" value="CO/DO=2-117"/>
</dbReference>
<dbReference type="PDB" id="6C4I">
    <property type="method" value="EM"/>
    <property type="resolution" value="3.24 A"/>
    <property type="chains" value="P=1-117"/>
</dbReference>
<dbReference type="PDB" id="6DNC">
    <property type="method" value="EM"/>
    <property type="resolution" value="3.70 A"/>
    <property type="chains" value="S=1-117"/>
</dbReference>
<dbReference type="PDB" id="6ENF">
    <property type="method" value="EM"/>
    <property type="resolution" value="3.20 A"/>
    <property type="chains" value="O=2-117"/>
</dbReference>
<dbReference type="PDB" id="6ENJ">
    <property type="method" value="EM"/>
    <property type="resolution" value="3.70 A"/>
    <property type="chains" value="O=2-117"/>
</dbReference>
<dbReference type="PDB" id="6ENU">
    <property type="method" value="EM"/>
    <property type="resolution" value="3.10 A"/>
    <property type="chains" value="O=2-117"/>
</dbReference>
<dbReference type="PDB" id="6GBZ">
    <property type="method" value="EM"/>
    <property type="resolution" value="3.80 A"/>
    <property type="chains" value="O=2-117"/>
</dbReference>
<dbReference type="PDB" id="6GC0">
    <property type="method" value="EM"/>
    <property type="resolution" value="3.80 A"/>
    <property type="chains" value="O=2-117"/>
</dbReference>
<dbReference type="PDB" id="6GC4">
    <property type="method" value="EM"/>
    <property type="resolution" value="4.30 A"/>
    <property type="chains" value="O=2-117"/>
</dbReference>
<dbReference type="PDB" id="6GC8">
    <property type="method" value="EM"/>
    <property type="resolution" value="3.80 A"/>
    <property type="chains" value="O=2-117"/>
</dbReference>
<dbReference type="PDB" id="6GWT">
    <property type="method" value="EM"/>
    <property type="resolution" value="3.80 A"/>
    <property type="chains" value="O=2-117"/>
</dbReference>
<dbReference type="PDB" id="6GXM">
    <property type="method" value="EM"/>
    <property type="resolution" value="3.80 A"/>
    <property type="chains" value="O=2-117"/>
</dbReference>
<dbReference type="PDB" id="6GXN">
    <property type="method" value="EM"/>
    <property type="resolution" value="3.90 A"/>
    <property type="chains" value="O=2-117"/>
</dbReference>
<dbReference type="PDB" id="6GXO">
    <property type="method" value="EM"/>
    <property type="resolution" value="3.90 A"/>
    <property type="chains" value="O=2-117"/>
</dbReference>
<dbReference type="PDB" id="6GXP">
    <property type="method" value="EM"/>
    <property type="resolution" value="4.40 A"/>
    <property type="chains" value="O=2-117"/>
</dbReference>
<dbReference type="PDB" id="6H4N">
    <property type="method" value="EM"/>
    <property type="resolution" value="3.00 A"/>
    <property type="chains" value="O=2-117"/>
</dbReference>
<dbReference type="PDB" id="6H58">
    <property type="method" value="EM"/>
    <property type="resolution" value="7.90 A"/>
    <property type="chains" value="O/OO=2-117"/>
</dbReference>
<dbReference type="PDB" id="6HRM">
    <property type="method" value="EM"/>
    <property type="resolution" value="2.96 A"/>
    <property type="chains" value="O=2-117"/>
</dbReference>
<dbReference type="PDB" id="6I0Y">
    <property type="method" value="EM"/>
    <property type="resolution" value="3.20 A"/>
    <property type="chains" value="O=2-117"/>
</dbReference>
<dbReference type="PDB" id="6I7V">
    <property type="method" value="X-ray"/>
    <property type="resolution" value="2.90 A"/>
    <property type="chains" value="CP/DP=1-117"/>
</dbReference>
<dbReference type="PDB" id="6O9J">
    <property type="method" value="EM"/>
    <property type="resolution" value="3.90 A"/>
    <property type="chains" value="O=1-117"/>
</dbReference>
<dbReference type="PDB" id="6O9K">
    <property type="method" value="EM"/>
    <property type="resolution" value="4.00 A"/>
    <property type="chains" value="O=2-117"/>
</dbReference>
<dbReference type="PDB" id="6OFX">
    <property type="method" value="EM"/>
    <property type="resolution" value="3.30 A"/>
    <property type="chains" value="o=2-117"/>
</dbReference>
<dbReference type="PDB" id="6OG7">
    <property type="method" value="EM"/>
    <property type="resolution" value="3.30 A"/>
    <property type="chains" value="o=2-117"/>
</dbReference>
<dbReference type="PDB" id="6OGF">
    <property type="method" value="EM"/>
    <property type="resolution" value="3.90 A"/>
    <property type="chains" value="o=1-117"/>
</dbReference>
<dbReference type="PDB" id="6OGG">
    <property type="method" value="EM"/>
    <property type="resolution" value="4.20 A"/>
    <property type="chains" value="o=1-117"/>
</dbReference>
<dbReference type="PDB" id="6OGI">
    <property type="method" value="EM"/>
    <property type="resolution" value="3.40 A"/>
    <property type="chains" value="o=1-117"/>
</dbReference>
<dbReference type="PDB" id="6OM6">
    <property type="method" value="EM"/>
    <property type="resolution" value="3.10 A"/>
    <property type="chains" value="O=1-117"/>
</dbReference>
<dbReference type="PDB" id="6ORE">
    <property type="method" value="EM"/>
    <property type="resolution" value="2.90 A"/>
    <property type="chains" value="O=2-117"/>
</dbReference>
<dbReference type="PDB" id="6ORL">
    <property type="method" value="EM"/>
    <property type="resolution" value="3.50 A"/>
    <property type="chains" value="O=2-117"/>
</dbReference>
<dbReference type="PDB" id="6OSK">
    <property type="method" value="EM"/>
    <property type="resolution" value="3.60 A"/>
    <property type="chains" value="O=2-117"/>
</dbReference>
<dbReference type="PDB" id="6OSQ">
    <property type="method" value="EM"/>
    <property type="resolution" value="3.50 A"/>
    <property type="chains" value="O=2-117"/>
</dbReference>
<dbReference type="PDB" id="6OST">
    <property type="method" value="EM"/>
    <property type="resolution" value="4.20 A"/>
    <property type="chains" value="O=2-117"/>
</dbReference>
<dbReference type="PDB" id="6OT3">
    <property type="method" value="EM"/>
    <property type="resolution" value="3.90 A"/>
    <property type="chains" value="O=2-117"/>
</dbReference>
<dbReference type="PDB" id="6OUO">
    <property type="method" value="EM"/>
    <property type="resolution" value="3.70 A"/>
    <property type="chains" value="O=2-117"/>
</dbReference>
<dbReference type="PDB" id="6PJ6">
    <property type="method" value="EM"/>
    <property type="resolution" value="2.20 A"/>
    <property type="chains" value="W=1-117"/>
</dbReference>
<dbReference type="PDB" id="6Q97">
    <property type="method" value="EM"/>
    <property type="resolution" value="3.90 A"/>
    <property type="chains" value="O=3-117"/>
</dbReference>
<dbReference type="PDB" id="6Q98">
    <property type="method" value="EM"/>
    <property type="resolution" value="4.30 A"/>
    <property type="chains" value="O=1-117"/>
</dbReference>
<dbReference type="PDB" id="6Q9A">
    <property type="method" value="EM"/>
    <property type="resolution" value="3.70 A"/>
    <property type="chains" value="O=3-117"/>
</dbReference>
<dbReference type="PDB" id="6QDW">
    <property type="method" value="EM"/>
    <property type="resolution" value="2.83 A"/>
    <property type="chains" value="o=1-117"/>
</dbReference>
<dbReference type="PDB" id="6QUL">
    <property type="method" value="EM"/>
    <property type="resolution" value="3.00 A"/>
    <property type="chains" value="P=1-117"/>
</dbReference>
<dbReference type="PDB" id="6S0K">
    <property type="method" value="EM"/>
    <property type="resolution" value="3.10 A"/>
    <property type="chains" value="P=1-117"/>
</dbReference>
<dbReference type="PDB" id="6SZS">
    <property type="method" value="EM"/>
    <property type="resolution" value="3.06 A"/>
    <property type="chains" value="O=1-117"/>
</dbReference>
<dbReference type="PDB" id="6TBV">
    <property type="method" value="EM"/>
    <property type="resolution" value="2.70 A"/>
    <property type="chains" value="L181=1-117"/>
</dbReference>
<dbReference type="PDB" id="6TC3">
    <property type="method" value="EM"/>
    <property type="resolution" value="2.70 A"/>
    <property type="chains" value="L181=1-117"/>
</dbReference>
<dbReference type="PDB" id="6U48">
    <property type="method" value="EM"/>
    <property type="resolution" value="2.87 A"/>
    <property type="chains" value="CP=2-117"/>
</dbReference>
<dbReference type="PDB" id="6VU3">
    <property type="method" value="EM"/>
    <property type="resolution" value="3.70 A"/>
    <property type="chains" value="x=2-117"/>
</dbReference>
<dbReference type="PDB" id="6VWL">
    <property type="method" value="EM"/>
    <property type="resolution" value="3.10 A"/>
    <property type="chains" value="M=1-117"/>
</dbReference>
<dbReference type="PDB" id="6VWM">
    <property type="method" value="EM"/>
    <property type="resolution" value="3.40 A"/>
    <property type="chains" value="M=1-117"/>
</dbReference>
<dbReference type="PDB" id="6VWN">
    <property type="method" value="EM"/>
    <property type="resolution" value="3.40 A"/>
    <property type="chains" value="M=1-117"/>
</dbReference>
<dbReference type="PDB" id="6VYQ">
    <property type="method" value="EM"/>
    <property type="resolution" value="3.70 A"/>
    <property type="chains" value="x=1-117"/>
</dbReference>
<dbReference type="PDB" id="6VYR">
    <property type="method" value="EM"/>
    <property type="resolution" value="3.80 A"/>
    <property type="chains" value="x=1-117"/>
</dbReference>
<dbReference type="PDB" id="6VYS">
    <property type="method" value="EM"/>
    <property type="resolution" value="3.70 A"/>
    <property type="chains" value="x=1-117"/>
</dbReference>
<dbReference type="PDB" id="6VYT">
    <property type="method" value="EM"/>
    <property type="resolution" value="14.00 A"/>
    <property type="chains" value="x=1-117"/>
</dbReference>
<dbReference type="PDB" id="6VYU">
    <property type="method" value="EM"/>
    <property type="resolution" value="7.00 A"/>
    <property type="chains" value="x=1-117"/>
</dbReference>
<dbReference type="PDB" id="6VYW">
    <property type="method" value="EM"/>
    <property type="resolution" value="7.00 A"/>
    <property type="chains" value="x=1-117"/>
</dbReference>
<dbReference type="PDB" id="6VYX">
    <property type="method" value="EM"/>
    <property type="resolution" value="9.90 A"/>
    <property type="chains" value="x=1-117"/>
</dbReference>
<dbReference type="PDB" id="6VYY">
    <property type="method" value="EM"/>
    <property type="resolution" value="9.90 A"/>
    <property type="chains" value="x=1-117"/>
</dbReference>
<dbReference type="PDB" id="6VYZ">
    <property type="method" value="EM"/>
    <property type="resolution" value="9.90 A"/>
    <property type="chains" value="x=1-117"/>
</dbReference>
<dbReference type="PDB" id="6VZ2">
    <property type="method" value="EM"/>
    <property type="resolution" value="10.00 A"/>
    <property type="chains" value="x=1-117"/>
</dbReference>
<dbReference type="PDB" id="6VZ3">
    <property type="method" value="EM"/>
    <property type="resolution" value="8.90 A"/>
    <property type="chains" value="x=2-117"/>
</dbReference>
<dbReference type="PDB" id="6VZ5">
    <property type="method" value="EM"/>
    <property type="resolution" value="8.90 A"/>
    <property type="chains" value="x=1-117"/>
</dbReference>
<dbReference type="PDB" id="6VZ7">
    <property type="method" value="EM"/>
    <property type="resolution" value="7.00 A"/>
    <property type="chains" value="x=2-117"/>
</dbReference>
<dbReference type="PDB" id="6VZJ">
    <property type="method" value="EM"/>
    <property type="resolution" value="4.10 A"/>
    <property type="chains" value="x=2-117"/>
</dbReference>
<dbReference type="PDB" id="6WD0">
    <property type="method" value="EM"/>
    <property type="resolution" value="3.00 A"/>
    <property type="chains" value="o=2-117"/>
</dbReference>
<dbReference type="PDB" id="6WD1">
    <property type="method" value="EM"/>
    <property type="resolution" value="3.30 A"/>
    <property type="chains" value="o=2-117"/>
</dbReference>
<dbReference type="PDB" id="6WD2">
    <property type="method" value="EM"/>
    <property type="resolution" value="3.60 A"/>
    <property type="chains" value="o=2-117"/>
</dbReference>
<dbReference type="PDB" id="6WD3">
    <property type="method" value="EM"/>
    <property type="resolution" value="3.60 A"/>
    <property type="chains" value="o=2-117"/>
</dbReference>
<dbReference type="PDB" id="6WD4">
    <property type="method" value="EM"/>
    <property type="resolution" value="3.70 A"/>
    <property type="chains" value="o=2-117"/>
</dbReference>
<dbReference type="PDB" id="6WD5">
    <property type="method" value="EM"/>
    <property type="resolution" value="3.60 A"/>
    <property type="chains" value="o=2-117"/>
</dbReference>
<dbReference type="PDB" id="6WD6">
    <property type="method" value="EM"/>
    <property type="resolution" value="3.70 A"/>
    <property type="chains" value="o=2-117"/>
</dbReference>
<dbReference type="PDB" id="6WD7">
    <property type="method" value="EM"/>
    <property type="resolution" value="3.90 A"/>
    <property type="chains" value="o=2-117"/>
</dbReference>
<dbReference type="PDB" id="6WD8">
    <property type="method" value="EM"/>
    <property type="resolution" value="3.70 A"/>
    <property type="chains" value="o=2-117"/>
</dbReference>
<dbReference type="PDB" id="6WD9">
    <property type="method" value="EM"/>
    <property type="resolution" value="3.70 A"/>
    <property type="chains" value="o=2-117"/>
</dbReference>
<dbReference type="PDB" id="6WDA">
    <property type="method" value="EM"/>
    <property type="resolution" value="3.80 A"/>
    <property type="chains" value="o=2-117"/>
</dbReference>
<dbReference type="PDB" id="6WDB">
    <property type="method" value="EM"/>
    <property type="resolution" value="4.00 A"/>
    <property type="chains" value="o=2-117"/>
</dbReference>
<dbReference type="PDB" id="6WDC">
    <property type="method" value="EM"/>
    <property type="resolution" value="4.20 A"/>
    <property type="chains" value="o=2-117"/>
</dbReference>
<dbReference type="PDB" id="6WDD">
    <property type="method" value="EM"/>
    <property type="resolution" value="3.20 A"/>
    <property type="chains" value="o=2-117"/>
</dbReference>
<dbReference type="PDB" id="6WDE">
    <property type="method" value="EM"/>
    <property type="resolution" value="3.00 A"/>
    <property type="chains" value="o=2-117"/>
</dbReference>
<dbReference type="PDB" id="6WDF">
    <property type="method" value="EM"/>
    <property type="resolution" value="3.30 A"/>
    <property type="chains" value="o=2-117"/>
</dbReference>
<dbReference type="PDB" id="6WDG">
    <property type="method" value="EM"/>
    <property type="resolution" value="3.30 A"/>
    <property type="chains" value="o=2-117"/>
</dbReference>
<dbReference type="PDB" id="6WDH">
    <property type="method" value="EM"/>
    <property type="resolution" value="4.30 A"/>
    <property type="chains" value="o=2-117"/>
</dbReference>
<dbReference type="PDB" id="6WDI">
    <property type="method" value="EM"/>
    <property type="resolution" value="4.00 A"/>
    <property type="chains" value="o=2-117"/>
</dbReference>
<dbReference type="PDB" id="6WDJ">
    <property type="method" value="EM"/>
    <property type="resolution" value="3.70 A"/>
    <property type="chains" value="o=2-117"/>
</dbReference>
<dbReference type="PDB" id="6WDK">
    <property type="method" value="EM"/>
    <property type="resolution" value="3.60 A"/>
    <property type="chains" value="o=2-117"/>
</dbReference>
<dbReference type="PDB" id="6WDL">
    <property type="method" value="EM"/>
    <property type="resolution" value="3.70 A"/>
    <property type="chains" value="o=2-117"/>
</dbReference>
<dbReference type="PDB" id="6WDM">
    <property type="method" value="EM"/>
    <property type="resolution" value="3.60 A"/>
    <property type="chains" value="o=2-117"/>
</dbReference>
<dbReference type="PDB" id="6WNT">
    <property type="method" value="EM"/>
    <property type="resolution" value="3.10 A"/>
    <property type="chains" value="o=2-117"/>
</dbReference>
<dbReference type="PDB" id="6WNV">
    <property type="method" value="EM"/>
    <property type="resolution" value="3.50 A"/>
    <property type="chains" value="o=2-117"/>
</dbReference>
<dbReference type="PDB" id="6WNW">
    <property type="method" value="EM"/>
    <property type="resolution" value="3.20 A"/>
    <property type="chains" value="o=2-117"/>
</dbReference>
<dbReference type="PDB" id="6X6T">
    <property type="method" value="EM"/>
    <property type="resolution" value="3.20 A"/>
    <property type="chains" value="x=1-117"/>
</dbReference>
<dbReference type="PDB" id="6X7F">
    <property type="method" value="EM"/>
    <property type="resolution" value="3.50 A"/>
    <property type="chains" value="x=1-117"/>
</dbReference>
<dbReference type="PDB" id="6X7K">
    <property type="method" value="EM"/>
    <property type="resolution" value="3.10 A"/>
    <property type="chains" value="x=1-117"/>
</dbReference>
<dbReference type="PDB" id="6X9Q">
    <property type="method" value="EM"/>
    <property type="resolution" value="4.80 A"/>
    <property type="chains" value="x=1-117"/>
</dbReference>
<dbReference type="PDB" id="6XDQ">
    <property type="method" value="EM"/>
    <property type="resolution" value="3.70 A"/>
    <property type="chains" value="x=1-117"/>
</dbReference>
<dbReference type="PDB" id="6XDR">
    <property type="method" value="EM"/>
    <property type="resolution" value="4.70 A"/>
    <property type="chains" value="x=1-117"/>
</dbReference>
<dbReference type="PDB" id="6XGF">
    <property type="method" value="EM"/>
    <property type="resolution" value="5.00 A"/>
    <property type="chains" value="x=1-117"/>
</dbReference>
<dbReference type="PDB" id="6XII">
    <property type="method" value="EM"/>
    <property type="resolution" value="7.00 A"/>
    <property type="chains" value="x=1-117"/>
</dbReference>
<dbReference type="PDB" id="6XIJ">
    <property type="method" value="EM"/>
    <property type="resolution" value="8.00 A"/>
    <property type="chains" value="x=1-117"/>
</dbReference>
<dbReference type="PDB" id="6XZ7">
    <property type="method" value="EM"/>
    <property type="resolution" value="2.10 A"/>
    <property type="chains" value="O=1-117"/>
</dbReference>
<dbReference type="PDB" id="6XZA">
    <property type="method" value="EM"/>
    <property type="resolution" value="2.66 A"/>
    <property type="chains" value="O2=1-117"/>
</dbReference>
<dbReference type="PDB" id="6XZB">
    <property type="method" value="EM"/>
    <property type="resolution" value="2.54 A"/>
    <property type="chains" value="O2=1-117"/>
</dbReference>
<dbReference type="PDB" id="6Y69">
    <property type="method" value="EM"/>
    <property type="resolution" value="2.86 A"/>
    <property type="chains" value="O=2-117"/>
</dbReference>
<dbReference type="PDB" id="6YSR">
    <property type="method" value="EM"/>
    <property type="resolution" value="3.10 A"/>
    <property type="chains" value="O=1-117"/>
</dbReference>
<dbReference type="PDB" id="6YSS">
    <property type="method" value="EM"/>
    <property type="resolution" value="2.60 A"/>
    <property type="chains" value="O=1-117"/>
</dbReference>
<dbReference type="PDB" id="6YST">
    <property type="method" value="EM"/>
    <property type="resolution" value="3.20 A"/>
    <property type="chains" value="O=1-117"/>
</dbReference>
<dbReference type="PDB" id="6YSU">
    <property type="method" value="EM"/>
    <property type="resolution" value="3.70 A"/>
    <property type="chains" value="O=1-117"/>
</dbReference>
<dbReference type="PDB" id="6ZTJ">
    <property type="method" value="EM"/>
    <property type="resolution" value="3.40 A"/>
    <property type="chains" value="BP=1-117"/>
</dbReference>
<dbReference type="PDB" id="6ZTL">
    <property type="method" value="EM"/>
    <property type="resolution" value="3.50 A"/>
    <property type="chains" value="BP=1-117"/>
</dbReference>
<dbReference type="PDB" id="6ZTM">
    <property type="method" value="EM"/>
    <property type="resolution" value="3.30 A"/>
    <property type="chains" value="BP=1-117"/>
</dbReference>
<dbReference type="PDB" id="6ZTN">
    <property type="method" value="EM"/>
    <property type="resolution" value="3.90 A"/>
    <property type="chains" value="BP=1-117"/>
</dbReference>
<dbReference type="PDB" id="6ZTO">
    <property type="method" value="EM"/>
    <property type="resolution" value="3.00 A"/>
    <property type="chains" value="BP=1-117"/>
</dbReference>
<dbReference type="PDB" id="6ZTP">
    <property type="method" value="EM"/>
    <property type="resolution" value="3.00 A"/>
    <property type="chains" value="BP=1-117"/>
</dbReference>
<dbReference type="PDB" id="6ZU1">
    <property type="method" value="EM"/>
    <property type="resolution" value="3.00 A"/>
    <property type="chains" value="BP=1-117"/>
</dbReference>
<dbReference type="PDB" id="7ABZ">
    <property type="method" value="EM"/>
    <property type="resolution" value="3.21 A"/>
    <property type="chains" value="O=2-117"/>
</dbReference>
<dbReference type="PDB" id="7AC7">
    <property type="method" value="EM"/>
    <property type="resolution" value="3.08 A"/>
    <property type="chains" value="O=3-117"/>
</dbReference>
<dbReference type="PDB" id="7ACJ">
    <property type="method" value="EM"/>
    <property type="resolution" value="3.20 A"/>
    <property type="chains" value="O=2-117"/>
</dbReference>
<dbReference type="PDB" id="7ACR">
    <property type="method" value="EM"/>
    <property type="resolution" value="3.44 A"/>
    <property type="chains" value="O=2-117"/>
</dbReference>
<dbReference type="PDB" id="7B5K">
    <property type="method" value="EM"/>
    <property type="resolution" value="2.90 A"/>
    <property type="chains" value="O=1-117"/>
</dbReference>
<dbReference type="PDB" id="7BL2">
    <property type="method" value="EM"/>
    <property type="resolution" value="3.70 A"/>
    <property type="chains" value="O=1-117"/>
</dbReference>
<dbReference type="PDB" id="7BL3">
    <property type="method" value="EM"/>
    <property type="resolution" value="3.50 A"/>
    <property type="chains" value="O=1-117"/>
</dbReference>
<dbReference type="PDB" id="7BL4">
    <property type="method" value="EM"/>
    <property type="resolution" value="2.40 A"/>
    <property type="chains" value="O=1-117"/>
</dbReference>
<dbReference type="PDB" id="7BL5">
    <property type="method" value="EM"/>
    <property type="resolution" value="3.30 A"/>
    <property type="chains" value="O=1-117"/>
</dbReference>
<dbReference type="PDB" id="7BL6">
    <property type="method" value="EM"/>
    <property type="resolution" value="4.00 A"/>
    <property type="chains" value="O=1-117"/>
</dbReference>
<dbReference type="PDB" id="7BV8">
    <property type="method" value="EM"/>
    <property type="resolution" value="3.14 A"/>
    <property type="chains" value="P=1-117"/>
</dbReference>
<dbReference type="PDB" id="7D6Z">
    <property type="method" value="EM"/>
    <property type="resolution" value="3.40 A"/>
    <property type="chains" value="O=1-117"/>
</dbReference>
<dbReference type="PDB" id="7D80">
    <property type="method" value="EM"/>
    <property type="resolution" value="4.10 A"/>
    <property type="chains" value="n=1-117"/>
</dbReference>
<dbReference type="PDB" id="7JSS">
    <property type="method" value="EM"/>
    <property type="resolution" value="3.70 A"/>
    <property type="chains" value="o=2-117"/>
</dbReference>
<dbReference type="PDB" id="7JSW">
    <property type="method" value="EM"/>
    <property type="resolution" value="3.80 A"/>
    <property type="chains" value="o=2-117"/>
</dbReference>
<dbReference type="PDB" id="7JSZ">
    <property type="method" value="EM"/>
    <property type="resolution" value="3.70 A"/>
    <property type="chains" value="o=2-117"/>
</dbReference>
<dbReference type="PDB" id="7JT1">
    <property type="method" value="EM"/>
    <property type="resolution" value="3.30 A"/>
    <property type="chains" value="o=2-117"/>
</dbReference>
<dbReference type="PDB" id="7JT2">
    <property type="method" value="EM"/>
    <property type="resolution" value="3.50 A"/>
    <property type="chains" value="o=2-117"/>
</dbReference>
<dbReference type="PDB" id="7JT3">
    <property type="method" value="EM"/>
    <property type="resolution" value="3.70 A"/>
    <property type="chains" value="o=2-117"/>
</dbReference>
<dbReference type="PDB" id="7K00">
    <property type="method" value="EM"/>
    <property type="resolution" value="1.98 A"/>
    <property type="chains" value="n=1-117"/>
</dbReference>
<dbReference type="PDB" id="7K50">
    <property type="method" value="EM"/>
    <property type="resolution" value="3.40 A"/>
    <property type="chains" value="o=2-117"/>
</dbReference>
<dbReference type="PDB" id="7K51">
    <property type="method" value="EM"/>
    <property type="resolution" value="3.50 A"/>
    <property type="chains" value="o=2-117"/>
</dbReference>
<dbReference type="PDB" id="7K52">
    <property type="method" value="EM"/>
    <property type="resolution" value="3.40 A"/>
    <property type="chains" value="o=2-117"/>
</dbReference>
<dbReference type="PDB" id="7K53">
    <property type="method" value="EM"/>
    <property type="resolution" value="3.20 A"/>
    <property type="chains" value="o=2-117"/>
</dbReference>
<dbReference type="PDB" id="7K54">
    <property type="method" value="EM"/>
    <property type="resolution" value="3.20 A"/>
    <property type="chains" value="o=2-117"/>
</dbReference>
<dbReference type="PDB" id="7K55">
    <property type="method" value="EM"/>
    <property type="resolution" value="3.30 A"/>
    <property type="chains" value="o=2-117"/>
</dbReference>
<dbReference type="PDB" id="7LV0">
    <property type="method" value="EM"/>
    <property type="resolution" value="3.20 A"/>
    <property type="chains" value="o=2-117"/>
</dbReference>
<dbReference type="PDB" id="7LVK">
    <property type="method" value="EM"/>
    <property type="resolution" value="2.20 A"/>
    <property type="chains" value="W=1-117"/>
</dbReference>
<dbReference type="PDB" id="7M5D">
    <property type="method" value="EM"/>
    <property type="resolution" value="2.80 A"/>
    <property type="chains" value="O=2-117"/>
</dbReference>
<dbReference type="PDB" id="7N1P">
    <property type="method" value="EM"/>
    <property type="resolution" value="2.33 A"/>
    <property type="chains" value="LR=1-117"/>
</dbReference>
<dbReference type="PDB" id="7N2C">
    <property type="method" value="EM"/>
    <property type="resolution" value="2.72 A"/>
    <property type="chains" value="LR=1-117"/>
</dbReference>
<dbReference type="PDB" id="7N2U">
    <property type="method" value="EM"/>
    <property type="resolution" value="2.53 A"/>
    <property type="chains" value="LR=1-117"/>
</dbReference>
<dbReference type="PDB" id="7N2V">
    <property type="method" value="EM"/>
    <property type="resolution" value="2.54 A"/>
    <property type="chains" value="LR=1-117"/>
</dbReference>
<dbReference type="PDB" id="7N30">
    <property type="method" value="EM"/>
    <property type="resolution" value="2.66 A"/>
    <property type="chains" value="LR=1-117"/>
</dbReference>
<dbReference type="PDB" id="7N31">
    <property type="method" value="EM"/>
    <property type="resolution" value="2.69 A"/>
    <property type="chains" value="LR=1-117"/>
</dbReference>
<dbReference type="PDB" id="7NBU">
    <property type="method" value="EM"/>
    <property type="resolution" value="3.11 A"/>
    <property type="chains" value="n=2-117"/>
</dbReference>
<dbReference type="PDB" id="7NWT">
    <property type="method" value="EM"/>
    <property type="resolution" value="2.66 A"/>
    <property type="chains" value="O=1-117"/>
</dbReference>
<dbReference type="PDB" id="7O19">
    <property type="method" value="EM"/>
    <property type="resolution" value="2.90 A"/>
    <property type="chains" value="BO=1-117"/>
</dbReference>
<dbReference type="PDB" id="7O1A">
    <property type="method" value="EM"/>
    <property type="resolution" value="2.40 A"/>
    <property type="chains" value="BO=1-117"/>
</dbReference>
<dbReference type="PDB" id="7O1C">
    <property type="method" value="EM"/>
    <property type="resolution" value="2.60 A"/>
    <property type="chains" value="BO=1-117"/>
</dbReference>
<dbReference type="PDB" id="7OIZ">
    <property type="method" value="EM"/>
    <property type="resolution" value="2.90 A"/>
    <property type="chains" value="n=1-117"/>
</dbReference>
<dbReference type="PDB" id="7OJ0">
    <property type="method" value="EM"/>
    <property type="resolution" value="3.50 A"/>
    <property type="chains" value="n=1-117"/>
</dbReference>
<dbReference type="PDB" id="7P3K">
    <property type="method" value="EM"/>
    <property type="resolution" value="2.90 A"/>
    <property type="chains" value="n=1-117"/>
</dbReference>
<dbReference type="PDB" id="7PJS">
    <property type="method" value="EM"/>
    <property type="resolution" value="2.35 A"/>
    <property type="chains" value="O=1-117"/>
</dbReference>
<dbReference type="PDB" id="7PJT">
    <property type="method" value="EM"/>
    <property type="resolution" value="6.00 A"/>
    <property type="chains" value="O=1-117"/>
</dbReference>
<dbReference type="PDB" id="7PJU">
    <property type="method" value="EM"/>
    <property type="resolution" value="9.50 A"/>
    <property type="chains" value="O=1-117"/>
</dbReference>
<dbReference type="PDB" id="7PJV">
    <property type="method" value="EM"/>
    <property type="resolution" value="3.10 A"/>
    <property type="chains" value="O=1-117"/>
</dbReference>
<dbReference type="PDB" id="7PJW">
    <property type="method" value="EM"/>
    <property type="resolution" value="4.00 A"/>
    <property type="chains" value="O=1-117"/>
</dbReference>
<dbReference type="PDB" id="7PJX">
    <property type="method" value="EM"/>
    <property type="resolution" value="6.50 A"/>
    <property type="chains" value="O=1-117"/>
</dbReference>
<dbReference type="PDB" id="7PJY">
    <property type="method" value="EM"/>
    <property type="resolution" value="3.10 A"/>
    <property type="chains" value="O=1-117"/>
</dbReference>
<dbReference type="PDB" id="7PJZ">
    <property type="method" value="EM"/>
    <property type="resolution" value="6.00 A"/>
    <property type="chains" value="O=1-117"/>
</dbReference>
<dbReference type="PDB" id="7Q4K">
    <property type="method" value="EM"/>
    <property type="resolution" value="3.00 A"/>
    <property type="chains" value="BO=1-117"/>
</dbReference>
<dbReference type="PDB" id="7QG8">
    <property type="method" value="EM"/>
    <property type="resolution" value="3.97 A"/>
    <property type="chains" value="b=1-117"/>
</dbReference>
<dbReference type="PDB" id="7QGH">
    <property type="method" value="EM"/>
    <property type="resolution" value="4.48 A"/>
    <property type="chains" value="b=1-117"/>
</dbReference>
<dbReference type="PDB" id="7QGN">
    <property type="method" value="EM"/>
    <property type="resolution" value="3.37 A"/>
    <property type="chains" value="b=1-117"/>
</dbReference>
<dbReference type="PDB" id="7QGR">
    <property type="method" value="EM"/>
    <property type="resolution" value="5.70 A"/>
    <property type="chains" value="b=1-117"/>
</dbReference>
<dbReference type="PDB" id="7QQ3">
    <property type="method" value="EM"/>
    <property type="resolution" value="2.10 A"/>
    <property type="chains" value="W=1-117"/>
</dbReference>
<dbReference type="PDB" id="7S1G">
    <property type="method" value="EM"/>
    <property type="resolution" value="2.48 A"/>
    <property type="chains" value="W=1-117"/>
</dbReference>
<dbReference type="PDB" id="7S1H">
    <property type="method" value="EM"/>
    <property type="resolution" value="2.35 A"/>
    <property type="chains" value="W=1-117"/>
</dbReference>
<dbReference type="PDB" id="7S1I">
    <property type="method" value="EM"/>
    <property type="resolution" value="2.48 A"/>
    <property type="chains" value="W=1-117"/>
</dbReference>
<dbReference type="PDB" id="7S1J">
    <property type="method" value="EM"/>
    <property type="resolution" value="2.47 A"/>
    <property type="chains" value="W=1-117"/>
</dbReference>
<dbReference type="PDB" id="7S1K">
    <property type="method" value="EM"/>
    <property type="resolution" value="2.42 A"/>
    <property type="chains" value="W=1-117"/>
</dbReference>
<dbReference type="PDB" id="7SA4">
    <property type="method" value="EM"/>
    <property type="resolution" value="2.55 A"/>
    <property type="chains" value="O=1-117"/>
</dbReference>
<dbReference type="PDB" id="7SS9">
    <property type="method" value="EM"/>
    <property type="resolution" value="3.90 A"/>
    <property type="chains" value="o=2-117"/>
</dbReference>
<dbReference type="PDB" id="7SSD">
    <property type="method" value="EM"/>
    <property type="resolution" value="3.30 A"/>
    <property type="chains" value="o=2-117"/>
</dbReference>
<dbReference type="PDB" id="7SSL">
    <property type="method" value="EM"/>
    <property type="resolution" value="3.80 A"/>
    <property type="chains" value="o=2-117"/>
</dbReference>
<dbReference type="PDB" id="7SSN">
    <property type="method" value="EM"/>
    <property type="resolution" value="3.20 A"/>
    <property type="chains" value="o=2-117"/>
</dbReference>
<dbReference type="PDB" id="7SSO">
    <property type="method" value="EM"/>
    <property type="resolution" value="3.20 A"/>
    <property type="chains" value="o=2-117"/>
</dbReference>
<dbReference type="PDB" id="7SSW">
    <property type="method" value="EM"/>
    <property type="resolution" value="3.80 A"/>
    <property type="chains" value="o=2-117"/>
</dbReference>
<dbReference type="PDB" id="7ST2">
    <property type="method" value="EM"/>
    <property type="resolution" value="2.90 A"/>
    <property type="chains" value="o=2-117"/>
</dbReference>
<dbReference type="PDB" id="7ST6">
    <property type="method" value="EM"/>
    <property type="resolution" value="3.00 A"/>
    <property type="chains" value="o=2-117"/>
</dbReference>
<dbReference type="PDB" id="7ST7">
    <property type="method" value="EM"/>
    <property type="resolution" value="3.20 A"/>
    <property type="chains" value="o=2-117"/>
</dbReference>
<dbReference type="PDB" id="7TOS">
    <property type="method" value="EM"/>
    <property type="resolution" value="2.90 A"/>
    <property type="chains" value="L18=2-117"/>
</dbReference>
<dbReference type="PDB" id="7UG7">
    <property type="method" value="EM"/>
    <property type="resolution" value="2.58 A"/>
    <property type="chains" value="LR=1-117"/>
</dbReference>
<dbReference type="PDB" id="7UPH">
    <property type="method" value="EM"/>
    <property type="resolution" value="4.18 A"/>
    <property type="chains" value="n=2-117"/>
</dbReference>
<dbReference type="PDB" id="7Y7C">
    <property type="method" value="EM"/>
    <property type="resolution" value="2.51 A"/>
    <property type="chains" value="n=1-117"/>
</dbReference>
<dbReference type="PDB" id="7Y7D">
    <property type="method" value="EM"/>
    <property type="resolution" value="2.58 A"/>
    <property type="chains" value="n=1-117"/>
</dbReference>
<dbReference type="PDB" id="7Y7E">
    <property type="method" value="EM"/>
    <property type="resolution" value="2.41 A"/>
    <property type="chains" value="n=1-117"/>
</dbReference>
<dbReference type="PDB" id="7Y7F">
    <property type="method" value="EM"/>
    <property type="resolution" value="2.43 A"/>
    <property type="chains" value="n=1-117"/>
</dbReference>
<dbReference type="PDB" id="7Y7G">
    <property type="method" value="EM"/>
    <property type="resolution" value="2.34 A"/>
    <property type="chains" value="n=1-117"/>
</dbReference>
<dbReference type="PDB" id="7Y7H">
    <property type="method" value="EM"/>
    <property type="resolution" value="2.51 A"/>
    <property type="chains" value="n=1-117"/>
</dbReference>
<dbReference type="PDB" id="7YLA">
    <property type="method" value="EM"/>
    <property type="resolution" value="2.52 A"/>
    <property type="chains" value="W=2-117"/>
</dbReference>
<dbReference type="PDB" id="7Z20">
    <property type="method" value="EM"/>
    <property type="resolution" value="2.29 A"/>
    <property type="chains" value="o=1-117"/>
</dbReference>
<dbReference type="PDB" id="7ZOD">
    <property type="method" value="EM"/>
    <property type="resolution" value="2.56 A"/>
    <property type="chains" value="o=1-117"/>
</dbReference>
<dbReference type="PDB" id="7ZP8">
    <property type="method" value="EM"/>
    <property type="resolution" value="2.20 A"/>
    <property type="chains" value="o=1-117"/>
</dbReference>
<dbReference type="PDB" id="7ZQ5">
    <property type="method" value="EM"/>
    <property type="resolution" value="2.70 A"/>
    <property type="chains" value="o=1-117"/>
</dbReference>
<dbReference type="PDB" id="7ZQ6">
    <property type="method" value="EM"/>
    <property type="resolution" value="2.75 A"/>
    <property type="chains" value="o=1-117"/>
</dbReference>
<dbReference type="PDB" id="7ZTA">
    <property type="method" value="EM"/>
    <property type="resolution" value="2.70 A"/>
    <property type="chains" value="L181=1-117"/>
</dbReference>
<dbReference type="PDB" id="8A3L">
    <property type="method" value="EM"/>
    <property type="resolution" value="3.42 A"/>
    <property type="chains" value="n=1-117"/>
</dbReference>
<dbReference type="PDB" id="8AKN">
    <property type="method" value="EM"/>
    <property type="resolution" value="2.30 A"/>
    <property type="chains" value="n=1-117"/>
</dbReference>
<dbReference type="PDB" id="8AM9">
    <property type="method" value="EM"/>
    <property type="resolution" value="2.80 A"/>
    <property type="chains" value="n=1-117"/>
</dbReference>
<dbReference type="PDB" id="8ANA">
    <property type="method" value="EM"/>
    <property type="resolution" value="2.10 A"/>
    <property type="chains" value="n=1-117"/>
</dbReference>
<dbReference type="PDB" id="8AP4">
    <property type="method" value="EM"/>
    <property type="resolution" value="3.00 A"/>
    <property type="chains" value="n=1-117"/>
</dbReference>
<dbReference type="PDB" id="8AYE">
    <property type="method" value="EM"/>
    <property type="resolution" value="1.96 A"/>
    <property type="chains" value="n=1-117"/>
</dbReference>
<dbReference type="PDB" id="8B0X">
    <property type="method" value="EM"/>
    <property type="resolution" value="1.55 A"/>
    <property type="chains" value="n=1-117"/>
</dbReference>
<dbReference type="PDB" id="8B7Y">
    <property type="method" value="EM"/>
    <property type="resolution" value="3.00 A"/>
    <property type="chains" value="W=1-117"/>
</dbReference>
<dbReference type="PDB" id="8BF7">
    <property type="method" value="EM"/>
    <property type="resolution" value="2.33 A"/>
    <property type="chains" value="L=1-117"/>
</dbReference>
<dbReference type="PDB" id="8BGE">
    <property type="method" value="EM"/>
    <property type="resolution" value="2.11 A"/>
    <property type="chains" value="L=1-117"/>
</dbReference>
<dbReference type="PDB" id="8BGH">
    <property type="method" value="EM"/>
    <property type="resolution" value="2.88 A"/>
    <property type="chains" value="L=1-117"/>
</dbReference>
<dbReference type="PDB" id="8BH4">
    <property type="method" value="EM"/>
    <property type="resolution" value="2.62 A"/>
    <property type="chains" value="L=1-117"/>
</dbReference>
<dbReference type="PDB" id="8BHJ">
    <property type="method" value="EM"/>
    <property type="resolution" value="2.81 A"/>
    <property type="chains" value="L=1-117"/>
</dbReference>
<dbReference type="PDB" id="8BHL">
    <property type="method" value="EM"/>
    <property type="resolution" value="2.21 A"/>
    <property type="chains" value="L=1-117"/>
</dbReference>
<dbReference type="PDB" id="8BHN">
    <property type="method" value="EM"/>
    <property type="resolution" value="2.85 A"/>
    <property type="chains" value="L=1-117"/>
</dbReference>
<dbReference type="PDB" id="8BHP">
    <property type="method" value="EM"/>
    <property type="resolution" value="2.37 A"/>
    <property type="chains" value="L=1-117"/>
</dbReference>
<dbReference type="PDB" id="8BIL">
    <property type="method" value="EM"/>
    <property type="resolution" value="2.04 A"/>
    <property type="chains" value="L=1-117"/>
</dbReference>
<dbReference type="PDB" id="8BIM">
    <property type="method" value="EM"/>
    <property type="resolution" value="2.04 A"/>
    <property type="chains" value="L=1-117"/>
</dbReference>
<dbReference type="PDB" id="8C8X">
    <property type="method" value="EM"/>
    <property type="resolution" value="3.93 A"/>
    <property type="chains" value="O=1-117"/>
</dbReference>
<dbReference type="PDB" id="8C8Y">
    <property type="method" value="EM"/>
    <property type="resolution" value="3.03 A"/>
    <property type="chains" value="O=1-117"/>
</dbReference>
<dbReference type="PDB" id="8C8Z">
    <property type="method" value="EM"/>
    <property type="resolution" value="3.12 A"/>
    <property type="chains" value="O=1-117"/>
</dbReference>
<dbReference type="PDB" id="8C90">
    <property type="method" value="EM"/>
    <property type="resolution" value="3.15 A"/>
    <property type="chains" value="O=1-117"/>
</dbReference>
<dbReference type="PDB" id="8C94">
    <property type="method" value="EM"/>
    <property type="resolution" value="3.80 A"/>
    <property type="chains" value="O=1-117"/>
</dbReference>
<dbReference type="PDB" id="8C95">
    <property type="method" value="EM"/>
    <property type="resolution" value="4.92 A"/>
    <property type="chains" value="O=1-117"/>
</dbReference>
<dbReference type="PDB" id="8CEU">
    <property type="method" value="EM"/>
    <property type="resolution" value="1.83 A"/>
    <property type="chains" value="n=1-117"/>
</dbReference>
<dbReference type="PDB" id="8CGD">
    <property type="method" value="EM"/>
    <property type="resolution" value="1.98 A"/>
    <property type="chains" value="n=1-117"/>
</dbReference>
<dbReference type="PDB" id="8CGV">
    <property type="method" value="EM"/>
    <property type="resolution" value="1.66 A"/>
    <property type="chains" value="n=1-117"/>
</dbReference>
<dbReference type="PDB" id="8EIU">
    <property type="method" value="EM"/>
    <property type="resolution" value="2.24 A"/>
    <property type="chains" value="n=1-117"/>
</dbReference>
<dbReference type="PDB" id="8EKC">
    <property type="method" value="EM"/>
    <property type="resolution" value="2.70 A"/>
    <property type="chains" value="Q=1-117"/>
</dbReference>
<dbReference type="PDB" id="8EMM">
    <property type="method" value="EM"/>
    <property type="resolution" value="2.10 A"/>
    <property type="chains" value="n=1-117"/>
</dbReference>
<dbReference type="PDB" id="8FIZ">
    <property type="method" value="EM"/>
    <property type="resolution" value="3.80 A"/>
    <property type="chains" value="BH=1-117"/>
</dbReference>
<dbReference type="PDB" id="8FTO">
    <property type="method" value="EM"/>
    <property type="resolution" value="1.85 A"/>
    <property type="chains" value="n=1-117"/>
</dbReference>
<dbReference type="PDB" id="8FZD">
    <property type="method" value="EM"/>
    <property type="resolution" value="3.10 A"/>
    <property type="chains" value="Q=1-117"/>
</dbReference>
<dbReference type="PDB" id="8FZE">
    <property type="method" value="EM"/>
    <property type="resolution" value="3.00 A"/>
    <property type="chains" value="Q=1-117"/>
</dbReference>
<dbReference type="PDB" id="8FZF">
    <property type="method" value="EM"/>
    <property type="resolution" value="3.20 A"/>
    <property type="chains" value="Q=1-117"/>
</dbReference>
<dbReference type="PDB" id="8FZG">
    <property type="method" value="EM"/>
    <property type="resolution" value="3.10 A"/>
    <property type="chains" value="Q=1-117"/>
</dbReference>
<dbReference type="PDB" id="8FZH">
    <property type="method" value="EM"/>
    <property type="resolution" value="2.90 A"/>
    <property type="chains" value="Q=1-117"/>
</dbReference>
<dbReference type="PDB" id="8FZI">
    <property type="method" value="EM"/>
    <property type="resolution" value="3.10 A"/>
    <property type="chains" value="Q=1-117"/>
</dbReference>
<dbReference type="PDB" id="8FZJ">
    <property type="method" value="EM"/>
    <property type="resolution" value="3.00 A"/>
    <property type="chains" value="Q=1-117"/>
</dbReference>
<dbReference type="PDB" id="8G2U">
    <property type="method" value="EM"/>
    <property type="resolution" value="3.00 A"/>
    <property type="chains" value="O=2-117"/>
</dbReference>
<dbReference type="PDB" id="8G31">
    <property type="method" value="EM"/>
    <property type="resolution" value="3.20 A"/>
    <property type="chains" value="O=2-117"/>
</dbReference>
<dbReference type="PDB" id="8G34">
    <property type="method" value="EM"/>
    <property type="resolution" value="3.20 A"/>
    <property type="chains" value="O=2-117"/>
</dbReference>
<dbReference type="PDB" id="8G38">
    <property type="method" value="EM"/>
    <property type="resolution" value="3.20 A"/>
    <property type="chains" value="O=2-117"/>
</dbReference>
<dbReference type="PDB" id="8G6W">
    <property type="method" value="EM"/>
    <property type="resolution" value="2.02 A"/>
    <property type="chains" value="n=1-117"/>
</dbReference>
<dbReference type="PDB" id="8G6X">
    <property type="method" value="EM"/>
    <property type="resolution" value="2.31 A"/>
    <property type="chains" value="n=1-117"/>
</dbReference>
<dbReference type="PDB" id="8G6Y">
    <property type="method" value="EM"/>
    <property type="resolution" value="2.09 A"/>
    <property type="chains" value="n=1-117"/>
</dbReference>
<dbReference type="PDB" id="8G7P">
    <property type="method" value="EM"/>
    <property type="resolution" value="2.90 A"/>
    <property type="chains" value="Q=1-117"/>
</dbReference>
<dbReference type="PDB" id="8G7Q">
    <property type="method" value="EM"/>
    <property type="resolution" value="3.10 A"/>
    <property type="chains" value="Q=1-117"/>
</dbReference>
<dbReference type="PDB" id="8G7R">
    <property type="method" value="EM"/>
    <property type="resolution" value="2.80 A"/>
    <property type="chains" value="Q=1-117"/>
</dbReference>
<dbReference type="PDB" id="8G7S">
    <property type="method" value="EM"/>
    <property type="resolution" value="3.10 A"/>
    <property type="chains" value="Q=1-117"/>
</dbReference>
<dbReference type="PDB" id="8HSP">
    <property type="method" value="EM"/>
    <property type="resolution" value="2.32 A"/>
    <property type="chains" value="n=1-117"/>
</dbReference>
<dbReference type="PDB" id="8HTZ">
    <property type="method" value="EM"/>
    <property type="resolution" value="2.40 A"/>
    <property type="chains" value="n=1-117"/>
</dbReference>
<dbReference type="PDB" id="8HU1">
    <property type="method" value="EM"/>
    <property type="resolution" value="2.69 A"/>
    <property type="chains" value="n=1-117"/>
</dbReference>
<dbReference type="PDB" id="8IFB">
    <property type="method" value="EM"/>
    <property type="resolution" value="2.43 A"/>
    <property type="chains" value="n=1-117"/>
</dbReference>
<dbReference type="PDB" id="8IFC">
    <property type="method" value="EM"/>
    <property type="resolution" value="2.90 A"/>
    <property type="chains" value="n=1-117"/>
</dbReference>
<dbReference type="PDB" id="8J1Z">
    <property type="method" value="EM"/>
    <property type="resolution" value="2.60 A"/>
    <property type="chains" value="n=1-117"/>
</dbReference>
<dbReference type="PDB" id="8P16">
    <property type="method" value="EM"/>
    <property type="resolution" value="2.77 A"/>
    <property type="chains" value="O=1-117"/>
</dbReference>
<dbReference type="PDB" id="8P17">
    <property type="method" value="EM"/>
    <property type="resolution" value="2.78 A"/>
    <property type="chains" value="O=1-117"/>
</dbReference>
<dbReference type="PDB" id="8P18">
    <property type="method" value="EM"/>
    <property type="resolution" value="2.77 A"/>
    <property type="chains" value="O=1-117"/>
</dbReference>
<dbReference type="PDB" id="8PEG">
    <property type="method" value="EM"/>
    <property type="resolution" value="3.30 A"/>
    <property type="chains" value="r=1-117"/>
</dbReference>
<dbReference type="PDB" id="8PHJ">
    <property type="method" value="EM"/>
    <property type="resolution" value="3.67 A"/>
    <property type="chains" value="n=1-117"/>
</dbReference>
<dbReference type="PDB" id="8PKL">
    <property type="method" value="EM"/>
    <property type="resolution" value="3.09 A"/>
    <property type="chains" value="r=1-117"/>
</dbReference>
<dbReference type="PDB" id="8PVA">
    <property type="method" value="EM"/>
    <property type="resolution" value="4.50 A"/>
    <property type="chains" value="n=1-117"/>
</dbReference>
<dbReference type="PDB" id="8Q4F">
    <property type="method" value="EM"/>
    <property type="resolution" value="3.10 A"/>
    <property type="chains" value="n=1-117"/>
</dbReference>
<dbReference type="PDB" id="8QBT">
    <property type="method" value="EM"/>
    <property type="resolution" value="2.20 A"/>
    <property type="chains" value="O=1-117"/>
</dbReference>
<dbReference type="PDB" id="8QK7">
    <property type="method" value="EM"/>
    <property type="resolution" value="2.77 A"/>
    <property type="chains" value="O=1-117"/>
</dbReference>
<dbReference type="PDB" id="8QOA">
    <property type="method" value="EM"/>
    <property type="resolution" value="2.00 A"/>
    <property type="chains" value="n=1-117"/>
</dbReference>
<dbReference type="PDB" id="8R3V">
    <property type="method" value="EM"/>
    <property type="resolution" value="3.28 A"/>
    <property type="chains" value="r2=1-117"/>
</dbReference>
<dbReference type="PDB" id="8R6C">
    <property type="method" value="EM"/>
    <property type="resolution" value="2.20 A"/>
    <property type="chains" value="n=1-117"/>
</dbReference>
<dbReference type="PDB" id="8R8M">
    <property type="method" value="EM"/>
    <property type="resolution" value="2.40 A"/>
    <property type="chains" value="n=1-117"/>
</dbReference>
<dbReference type="PDB" id="8RCL">
    <property type="method" value="EM"/>
    <property type="resolution" value="3.49 A"/>
    <property type="chains" value="r2=1-117"/>
</dbReference>
<dbReference type="PDB" id="8RCM">
    <property type="method" value="EM"/>
    <property type="resolution" value="3.59 A"/>
    <property type="chains" value="r2=1-117"/>
</dbReference>
<dbReference type="PDB" id="8RCS">
    <property type="method" value="EM"/>
    <property type="resolution" value="4.46 A"/>
    <property type="chains" value="r2=1-117"/>
</dbReference>
<dbReference type="PDB" id="8RCT">
    <property type="method" value="EM"/>
    <property type="resolution" value="5.32 A"/>
    <property type="chains" value="r2=1-117"/>
</dbReference>
<dbReference type="PDB" id="8RPY">
    <property type="method" value="EM"/>
    <property type="resolution" value="2.64 A"/>
    <property type="chains" value="O=2-117"/>
</dbReference>
<dbReference type="PDB" id="8RPZ">
    <property type="method" value="EM"/>
    <property type="resolution" value="2.44 A"/>
    <property type="chains" value="O=2-117"/>
</dbReference>
<dbReference type="PDB" id="8RQ0">
    <property type="method" value="EM"/>
    <property type="resolution" value="2.44 A"/>
    <property type="chains" value="O=2-117"/>
</dbReference>
<dbReference type="PDB" id="8RQ2">
    <property type="method" value="EM"/>
    <property type="resolution" value="2.44 A"/>
    <property type="chains" value="O=2-117"/>
</dbReference>
<dbReference type="PDB" id="8SYL">
    <property type="method" value="EM"/>
    <property type="resolution" value="2.90 A"/>
    <property type="chains" value="Q=1-117"/>
</dbReference>
<dbReference type="PDB" id="8T5D">
    <property type="method" value="EM"/>
    <property type="resolution" value="3.20 A"/>
    <property type="chains" value="O=2-117"/>
</dbReference>
<dbReference type="PDB" id="8T5H">
    <property type="method" value="EM"/>
    <property type="resolution" value="3.30 A"/>
    <property type="chains" value="O=2-117"/>
</dbReference>
<dbReference type="PDB" id="8VS9">
    <property type="method" value="EM"/>
    <property type="resolution" value="3.90 A"/>
    <property type="chains" value="L18=1-117"/>
</dbReference>
<dbReference type="PDB" id="8VSA">
    <property type="method" value="EM"/>
    <property type="resolution" value="3.70 A"/>
    <property type="chains" value="L18=1-117"/>
</dbReference>
<dbReference type="PDB" id="8W51">
    <property type="method" value="EM"/>
    <property type="resolution" value="2.40 A"/>
    <property type="chains" value="P=1-117"/>
</dbReference>
<dbReference type="PDB" id="8YUO">
    <property type="method" value="EM"/>
    <property type="resolution" value="2.25 A"/>
    <property type="chains" value="n=1-117"/>
</dbReference>
<dbReference type="PDB" id="8YUP">
    <property type="method" value="EM"/>
    <property type="resolution" value="2.39 A"/>
    <property type="chains" value="n=1-117"/>
</dbReference>
<dbReference type="PDB" id="8YUQ">
    <property type="method" value="EM"/>
    <property type="resolution" value="2.41 A"/>
    <property type="chains" value="n=1-117"/>
</dbReference>
<dbReference type="PDB" id="8YUR">
    <property type="method" value="EM"/>
    <property type="resolution" value="2.47 A"/>
    <property type="chains" value="n=1-117"/>
</dbReference>
<dbReference type="PDB" id="8YUS">
    <property type="method" value="EM"/>
    <property type="resolution" value="2.43 A"/>
    <property type="chains" value="n=1-117"/>
</dbReference>
<dbReference type="PDB" id="9D89">
    <property type="method" value="EM"/>
    <property type="resolution" value="1.95 A"/>
    <property type="chains" value="n=2-117"/>
</dbReference>
<dbReference type="PDB" id="9FBV">
    <property type="method" value="EM"/>
    <property type="resolution" value="2.40 A"/>
    <property type="chains" value="n=1-117"/>
</dbReference>
<dbReference type="PDB" id="9GFT">
    <property type="method" value="EM"/>
    <property type="resolution" value="3.10 A"/>
    <property type="chains" value="Aj/b=1-117"/>
</dbReference>
<dbReference type="PDB" id="9GGR">
    <property type="method" value="EM"/>
    <property type="resolution" value="3.20 A"/>
    <property type="chains" value="Aj/b=1-117"/>
</dbReference>
<dbReference type="PDB" id="9H3P">
    <property type="method" value="EM"/>
    <property type="resolution" value="7.06 A"/>
    <property type="chains" value="O=2-117"/>
</dbReference>
<dbReference type="PDB" id="9H3Q">
    <property type="method" value="EM"/>
    <property type="resolution" value="4.02 A"/>
    <property type="chains" value="O=2-117"/>
</dbReference>
<dbReference type="PDB" id="9H3R">
    <property type="method" value="EM"/>
    <property type="resolution" value="4.12 A"/>
    <property type="chains" value="O=2-117"/>
</dbReference>
<dbReference type="PDB" id="9H3S">
    <property type="method" value="EM"/>
    <property type="resolution" value="4.16 A"/>
    <property type="chains" value="O=2-117"/>
</dbReference>
<dbReference type="PDB" id="9H3V">
    <property type="method" value="EM"/>
    <property type="resolution" value="3.55 A"/>
    <property type="chains" value="O=2-117"/>
</dbReference>
<dbReference type="PDB" id="9H3W">
    <property type="method" value="EM"/>
    <property type="resolution" value="5.38 A"/>
    <property type="chains" value="O=2-117"/>
</dbReference>
<dbReference type="PDB" id="9H3X">
    <property type="method" value="EM"/>
    <property type="resolution" value="4.12 A"/>
    <property type="chains" value="O=2-117"/>
</dbReference>
<dbReference type="PDB" id="9H3Y">
    <property type="method" value="EM"/>
    <property type="resolution" value="3.09 A"/>
    <property type="chains" value="O=2-117"/>
</dbReference>
<dbReference type="PDB" id="9H3Z">
    <property type="method" value="EM"/>
    <property type="resolution" value="2.98 A"/>
    <property type="chains" value="O=2-117"/>
</dbReference>
<dbReference type="PDB" id="9HA4">
    <property type="method" value="EM"/>
    <property type="resolution" value="4.26 A"/>
    <property type="chains" value="O=2-117"/>
</dbReference>
<dbReference type="PDB" id="9HA6">
    <property type="method" value="EM"/>
    <property type="resolution" value="3.08 A"/>
    <property type="chains" value="O=2-117"/>
</dbReference>
<dbReference type="PDB" id="9HA7">
    <property type="method" value="EM"/>
    <property type="resolution" value="4.37 A"/>
    <property type="chains" value="O=2-117"/>
</dbReference>
<dbReference type="PDB" id="9MOR">
    <property type="method" value="EM"/>
    <property type="resolution" value="2.65 A"/>
    <property type="chains" value="O=1-117"/>
</dbReference>
<dbReference type="PDB" id="9MQ4">
    <property type="method" value="EM"/>
    <property type="resolution" value="2.78 A"/>
    <property type="chains" value="O=1-117"/>
</dbReference>
<dbReference type="PDBsum" id="1ML5"/>
<dbReference type="PDBsum" id="2J28"/>
<dbReference type="PDBsum" id="2RDO"/>
<dbReference type="PDBsum" id="3BBX"/>
<dbReference type="PDBsum" id="3J5L"/>
<dbReference type="PDBsum" id="3J7Z"/>
<dbReference type="PDBsum" id="3J8G"/>
<dbReference type="PDBsum" id="3J9Y"/>
<dbReference type="PDBsum" id="3J9Z"/>
<dbReference type="PDBsum" id="3JA1"/>
<dbReference type="PDBsum" id="3JBU"/>
<dbReference type="PDBsum" id="3JBV"/>
<dbReference type="PDBsum" id="3JCD"/>
<dbReference type="PDBsum" id="3JCE"/>
<dbReference type="PDBsum" id="3JCJ"/>
<dbReference type="PDBsum" id="3JCN"/>
<dbReference type="PDBsum" id="4CSU"/>
<dbReference type="PDBsum" id="4U1U"/>
<dbReference type="PDBsum" id="4U1V"/>
<dbReference type="PDBsum" id="4U20"/>
<dbReference type="PDBsum" id="4U24"/>
<dbReference type="PDBsum" id="4U25"/>
<dbReference type="PDBsum" id="4U26"/>
<dbReference type="PDBsum" id="4U27"/>
<dbReference type="PDBsum" id="4UY8"/>
<dbReference type="PDBsum" id="4V47"/>
<dbReference type="PDBsum" id="4V48"/>
<dbReference type="PDBsum" id="4V4H"/>
<dbReference type="PDBsum" id="4V4Q"/>
<dbReference type="PDBsum" id="4V4V"/>
<dbReference type="PDBsum" id="4V4W"/>
<dbReference type="PDBsum" id="4V50"/>
<dbReference type="PDBsum" id="4V52"/>
<dbReference type="PDBsum" id="4V53"/>
<dbReference type="PDBsum" id="4V54"/>
<dbReference type="PDBsum" id="4V55"/>
<dbReference type="PDBsum" id="4V56"/>
<dbReference type="PDBsum" id="4V57"/>
<dbReference type="PDBsum" id="4V5B"/>
<dbReference type="PDBsum" id="4V5H"/>
<dbReference type="PDBsum" id="4V5Y"/>
<dbReference type="PDBsum" id="4V64"/>
<dbReference type="PDBsum" id="4V65"/>
<dbReference type="PDBsum" id="4V66"/>
<dbReference type="PDBsum" id="4V69"/>
<dbReference type="PDBsum" id="4V6C"/>
<dbReference type="PDBsum" id="4V6D"/>
<dbReference type="PDBsum" id="4V6E"/>
<dbReference type="PDBsum" id="4V6K"/>
<dbReference type="PDBsum" id="4V6L"/>
<dbReference type="PDBsum" id="4V6M"/>
<dbReference type="PDBsum" id="4V6N"/>
<dbReference type="PDBsum" id="4V6O"/>
<dbReference type="PDBsum" id="4V6P"/>
<dbReference type="PDBsum" id="4V6Q"/>
<dbReference type="PDBsum" id="4V6R"/>
<dbReference type="PDBsum" id="4V6S"/>
<dbReference type="PDBsum" id="4V6T"/>
<dbReference type="PDBsum" id="4V6V"/>
<dbReference type="PDBsum" id="4V6Y"/>
<dbReference type="PDBsum" id="4V6Z"/>
<dbReference type="PDBsum" id="4V70"/>
<dbReference type="PDBsum" id="4V71"/>
<dbReference type="PDBsum" id="4V72"/>
<dbReference type="PDBsum" id="4V73"/>
<dbReference type="PDBsum" id="4V74"/>
<dbReference type="PDBsum" id="4V75"/>
<dbReference type="PDBsum" id="4V76"/>
<dbReference type="PDBsum" id="4V77"/>
<dbReference type="PDBsum" id="4V78"/>
<dbReference type="PDBsum" id="4V79"/>
<dbReference type="PDBsum" id="4V7A"/>
<dbReference type="PDBsum" id="4V7B"/>
<dbReference type="PDBsum" id="4V7C"/>
<dbReference type="PDBsum" id="4V7D"/>
<dbReference type="PDBsum" id="4V7I"/>
<dbReference type="PDBsum" id="4V7S"/>
<dbReference type="PDBsum" id="4V7T"/>
<dbReference type="PDBsum" id="4V7U"/>
<dbReference type="PDBsum" id="4V7V"/>
<dbReference type="PDBsum" id="4V85"/>
<dbReference type="PDBsum" id="4V89"/>
<dbReference type="PDBsum" id="4V9C"/>
<dbReference type="PDBsum" id="4V9D"/>
<dbReference type="PDBsum" id="4V9O"/>
<dbReference type="PDBsum" id="4V9P"/>
<dbReference type="PDBsum" id="4WF1"/>
<dbReference type="PDBsum" id="4WOI"/>
<dbReference type="PDBsum" id="4WWW"/>
<dbReference type="PDBsum" id="4YBB"/>
<dbReference type="PDBsum" id="5ADY"/>
<dbReference type="PDBsum" id="5AFI"/>
<dbReference type="PDBsum" id="5AKA"/>
<dbReference type="PDBsum" id="5GAD"/>
<dbReference type="PDBsum" id="5GAE"/>
<dbReference type="PDBsum" id="5GAF"/>
<dbReference type="PDBsum" id="5GAG"/>
<dbReference type="PDBsum" id="5GAH"/>
<dbReference type="PDBsum" id="5H5U"/>
<dbReference type="PDBsum" id="5IQR"/>
<dbReference type="PDBsum" id="5IT8"/>
<dbReference type="PDBsum" id="5J5B"/>
<dbReference type="PDBsum" id="5J7L"/>
<dbReference type="PDBsum" id="5J88"/>
<dbReference type="PDBsum" id="5J8A"/>
<dbReference type="PDBsum" id="5J91"/>
<dbReference type="PDBsum" id="5JC9"/>
<dbReference type="PDBsum" id="5JTE"/>
<dbReference type="PDBsum" id="5JU8"/>
<dbReference type="PDBsum" id="5KCR"/>
<dbReference type="PDBsum" id="5KCS"/>
<dbReference type="PDBsum" id="5KPS"/>
<dbReference type="PDBsum" id="5KPV"/>
<dbReference type="PDBsum" id="5KPW"/>
<dbReference type="PDBsum" id="5KPX"/>
<dbReference type="PDBsum" id="5L3P"/>
<dbReference type="PDBsum" id="5LZA"/>
<dbReference type="PDBsum" id="5LZB"/>
<dbReference type="PDBsum" id="5LZC"/>
<dbReference type="PDBsum" id="5LZD"/>
<dbReference type="PDBsum" id="5LZE"/>
<dbReference type="PDBsum" id="5LZF"/>
<dbReference type="PDBsum" id="5MDV"/>
<dbReference type="PDBsum" id="5MDW"/>
<dbReference type="PDBsum" id="5MDY"/>
<dbReference type="PDBsum" id="5MDZ"/>
<dbReference type="PDBsum" id="5MGP"/>
<dbReference type="PDBsum" id="5NCO"/>
<dbReference type="PDBsum" id="5NP6"/>
<dbReference type="PDBsum" id="5NWY"/>
<dbReference type="PDBsum" id="5O2R"/>
<dbReference type="PDBsum" id="5U4I"/>
<dbReference type="PDBsum" id="5U9F"/>
<dbReference type="PDBsum" id="5U9G"/>
<dbReference type="PDBsum" id="5UYK"/>
<dbReference type="PDBsum" id="5UYL"/>
<dbReference type="PDBsum" id="5UYM"/>
<dbReference type="PDBsum" id="5UYN"/>
<dbReference type="PDBsum" id="5UYP"/>
<dbReference type="PDBsum" id="5UYQ"/>
<dbReference type="PDBsum" id="5WDT"/>
<dbReference type="PDBsum" id="5WE4"/>
<dbReference type="PDBsum" id="5WE6"/>
<dbReference type="PDBsum" id="5WF0"/>
<dbReference type="PDBsum" id="5WFK"/>
<dbReference type="PDBsum" id="5WFS"/>
<dbReference type="PDBsum" id="6BU8"/>
<dbReference type="PDBsum" id="6BY1"/>
<dbReference type="PDBsum" id="6C4I"/>
<dbReference type="PDBsum" id="6DNC"/>
<dbReference type="PDBsum" id="6ENF"/>
<dbReference type="PDBsum" id="6ENJ"/>
<dbReference type="PDBsum" id="6ENU"/>
<dbReference type="PDBsum" id="6GBZ"/>
<dbReference type="PDBsum" id="6GC0"/>
<dbReference type="PDBsum" id="6GC4"/>
<dbReference type="PDBsum" id="6GC8"/>
<dbReference type="PDBsum" id="6GWT"/>
<dbReference type="PDBsum" id="6GXM"/>
<dbReference type="PDBsum" id="6GXN"/>
<dbReference type="PDBsum" id="6GXO"/>
<dbReference type="PDBsum" id="6GXP"/>
<dbReference type="PDBsum" id="6H4N"/>
<dbReference type="PDBsum" id="6H58"/>
<dbReference type="PDBsum" id="6HRM"/>
<dbReference type="PDBsum" id="6I0Y"/>
<dbReference type="PDBsum" id="6I7V"/>
<dbReference type="PDBsum" id="6O9J"/>
<dbReference type="PDBsum" id="6O9K"/>
<dbReference type="PDBsum" id="6OFX"/>
<dbReference type="PDBsum" id="6OG7"/>
<dbReference type="PDBsum" id="6OGF"/>
<dbReference type="PDBsum" id="6OGG"/>
<dbReference type="PDBsum" id="6OGI"/>
<dbReference type="PDBsum" id="6OM6"/>
<dbReference type="PDBsum" id="6ORE"/>
<dbReference type="PDBsum" id="6ORL"/>
<dbReference type="PDBsum" id="6OSK"/>
<dbReference type="PDBsum" id="6OSQ"/>
<dbReference type="PDBsum" id="6OST"/>
<dbReference type="PDBsum" id="6OT3"/>
<dbReference type="PDBsum" id="6OUO"/>
<dbReference type="PDBsum" id="6PJ6"/>
<dbReference type="PDBsum" id="6Q97"/>
<dbReference type="PDBsum" id="6Q98"/>
<dbReference type="PDBsum" id="6Q9A"/>
<dbReference type="PDBsum" id="6QDW"/>
<dbReference type="PDBsum" id="6QUL"/>
<dbReference type="PDBsum" id="6S0K"/>
<dbReference type="PDBsum" id="6SZS"/>
<dbReference type="PDBsum" id="6TBV"/>
<dbReference type="PDBsum" id="6TC3"/>
<dbReference type="PDBsum" id="6U48"/>
<dbReference type="PDBsum" id="6VU3"/>
<dbReference type="PDBsum" id="6VWL"/>
<dbReference type="PDBsum" id="6VWM"/>
<dbReference type="PDBsum" id="6VWN"/>
<dbReference type="PDBsum" id="6VYQ"/>
<dbReference type="PDBsum" id="6VYR"/>
<dbReference type="PDBsum" id="6VYS"/>
<dbReference type="PDBsum" id="6VYT"/>
<dbReference type="PDBsum" id="6VYU"/>
<dbReference type="PDBsum" id="6VYW"/>
<dbReference type="PDBsum" id="6VYX"/>
<dbReference type="PDBsum" id="6VYY"/>
<dbReference type="PDBsum" id="6VYZ"/>
<dbReference type="PDBsum" id="6VZ2"/>
<dbReference type="PDBsum" id="6VZ3"/>
<dbReference type="PDBsum" id="6VZ5"/>
<dbReference type="PDBsum" id="6VZ7"/>
<dbReference type="PDBsum" id="6VZJ"/>
<dbReference type="PDBsum" id="6WD0"/>
<dbReference type="PDBsum" id="6WD1"/>
<dbReference type="PDBsum" id="6WD2"/>
<dbReference type="PDBsum" id="6WD3"/>
<dbReference type="PDBsum" id="6WD4"/>
<dbReference type="PDBsum" id="6WD5"/>
<dbReference type="PDBsum" id="6WD6"/>
<dbReference type="PDBsum" id="6WD7"/>
<dbReference type="PDBsum" id="6WD8"/>
<dbReference type="PDBsum" id="6WD9"/>
<dbReference type="PDBsum" id="6WDA"/>
<dbReference type="PDBsum" id="6WDB"/>
<dbReference type="PDBsum" id="6WDC"/>
<dbReference type="PDBsum" id="6WDD"/>
<dbReference type="PDBsum" id="6WDE"/>
<dbReference type="PDBsum" id="6WDF"/>
<dbReference type="PDBsum" id="6WDG"/>
<dbReference type="PDBsum" id="6WDH"/>
<dbReference type="PDBsum" id="6WDI"/>
<dbReference type="PDBsum" id="6WDJ"/>
<dbReference type="PDBsum" id="6WDK"/>
<dbReference type="PDBsum" id="6WDL"/>
<dbReference type="PDBsum" id="6WDM"/>
<dbReference type="PDBsum" id="6WNT"/>
<dbReference type="PDBsum" id="6WNV"/>
<dbReference type="PDBsum" id="6WNW"/>
<dbReference type="PDBsum" id="6X6T"/>
<dbReference type="PDBsum" id="6X7F"/>
<dbReference type="PDBsum" id="6X7K"/>
<dbReference type="PDBsum" id="6X9Q"/>
<dbReference type="PDBsum" id="6XDQ"/>
<dbReference type="PDBsum" id="6XDR"/>
<dbReference type="PDBsum" id="6XGF"/>
<dbReference type="PDBsum" id="6XII"/>
<dbReference type="PDBsum" id="6XIJ"/>
<dbReference type="PDBsum" id="6XZ7"/>
<dbReference type="PDBsum" id="6XZA"/>
<dbReference type="PDBsum" id="6XZB"/>
<dbReference type="PDBsum" id="6Y69"/>
<dbReference type="PDBsum" id="6YSR"/>
<dbReference type="PDBsum" id="6YSS"/>
<dbReference type="PDBsum" id="6YST"/>
<dbReference type="PDBsum" id="6YSU"/>
<dbReference type="PDBsum" id="6ZTJ"/>
<dbReference type="PDBsum" id="6ZTL"/>
<dbReference type="PDBsum" id="6ZTM"/>
<dbReference type="PDBsum" id="6ZTN"/>
<dbReference type="PDBsum" id="6ZTO"/>
<dbReference type="PDBsum" id="6ZTP"/>
<dbReference type="PDBsum" id="6ZU1"/>
<dbReference type="PDBsum" id="7ABZ"/>
<dbReference type="PDBsum" id="7AC7"/>
<dbReference type="PDBsum" id="7ACJ"/>
<dbReference type="PDBsum" id="7ACR"/>
<dbReference type="PDBsum" id="7B5K"/>
<dbReference type="PDBsum" id="7BL2"/>
<dbReference type="PDBsum" id="7BL3"/>
<dbReference type="PDBsum" id="7BL4"/>
<dbReference type="PDBsum" id="7BL5"/>
<dbReference type="PDBsum" id="7BL6"/>
<dbReference type="PDBsum" id="7BV8"/>
<dbReference type="PDBsum" id="7D6Z"/>
<dbReference type="PDBsum" id="7D80"/>
<dbReference type="PDBsum" id="7JSS"/>
<dbReference type="PDBsum" id="7JSW"/>
<dbReference type="PDBsum" id="7JSZ"/>
<dbReference type="PDBsum" id="7JT1"/>
<dbReference type="PDBsum" id="7JT2"/>
<dbReference type="PDBsum" id="7JT3"/>
<dbReference type="PDBsum" id="7K00"/>
<dbReference type="PDBsum" id="7K50"/>
<dbReference type="PDBsum" id="7K51"/>
<dbReference type="PDBsum" id="7K52"/>
<dbReference type="PDBsum" id="7K53"/>
<dbReference type="PDBsum" id="7K54"/>
<dbReference type="PDBsum" id="7K55"/>
<dbReference type="PDBsum" id="7LV0"/>
<dbReference type="PDBsum" id="7LVK"/>
<dbReference type="PDBsum" id="7M5D"/>
<dbReference type="PDBsum" id="7N1P"/>
<dbReference type="PDBsum" id="7N2C"/>
<dbReference type="PDBsum" id="7N2U"/>
<dbReference type="PDBsum" id="7N2V"/>
<dbReference type="PDBsum" id="7N30"/>
<dbReference type="PDBsum" id="7N31"/>
<dbReference type="PDBsum" id="7NBU"/>
<dbReference type="PDBsum" id="7NWT"/>
<dbReference type="PDBsum" id="7O19"/>
<dbReference type="PDBsum" id="7O1A"/>
<dbReference type="PDBsum" id="7O1C"/>
<dbReference type="PDBsum" id="7OIZ"/>
<dbReference type="PDBsum" id="7OJ0"/>
<dbReference type="PDBsum" id="7P3K"/>
<dbReference type="PDBsum" id="7PJS"/>
<dbReference type="PDBsum" id="7PJT"/>
<dbReference type="PDBsum" id="7PJU"/>
<dbReference type="PDBsum" id="7PJV"/>
<dbReference type="PDBsum" id="7PJW"/>
<dbReference type="PDBsum" id="7PJX"/>
<dbReference type="PDBsum" id="7PJY"/>
<dbReference type="PDBsum" id="7PJZ"/>
<dbReference type="PDBsum" id="7Q4K"/>
<dbReference type="PDBsum" id="7QG8"/>
<dbReference type="PDBsum" id="7QGH"/>
<dbReference type="PDBsum" id="7QGN"/>
<dbReference type="PDBsum" id="7QGR"/>
<dbReference type="PDBsum" id="7QQ3"/>
<dbReference type="PDBsum" id="7S1G"/>
<dbReference type="PDBsum" id="7S1H"/>
<dbReference type="PDBsum" id="7S1I"/>
<dbReference type="PDBsum" id="7S1J"/>
<dbReference type="PDBsum" id="7S1K"/>
<dbReference type="PDBsum" id="7SA4"/>
<dbReference type="PDBsum" id="7SS9"/>
<dbReference type="PDBsum" id="7SSD"/>
<dbReference type="PDBsum" id="7SSL"/>
<dbReference type="PDBsum" id="7SSN"/>
<dbReference type="PDBsum" id="7SSO"/>
<dbReference type="PDBsum" id="7SSW"/>
<dbReference type="PDBsum" id="7ST2"/>
<dbReference type="PDBsum" id="7ST6"/>
<dbReference type="PDBsum" id="7ST7"/>
<dbReference type="PDBsum" id="7TOS"/>
<dbReference type="PDBsum" id="7UG7"/>
<dbReference type="PDBsum" id="7UPH"/>
<dbReference type="PDBsum" id="7Y7C"/>
<dbReference type="PDBsum" id="7Y7D"/>
<dbReference type="PDBsum" id="7Y7E"/>
<dbReference type="PDBsum" id="7Y7F"/>
<dbReference type="PDBsum" id="7Y7G"/>
<dbReference type="PDBsum" id="7Y7H"/>
<dbReference type="PDBsum" id="7YLA"/>
<dbReference type="PDBsum" id="7Z20"/>
<dbReference type="PDBsum" id="7ZOD"/>
<dbReference type="PDBsum" id="7ZP8"/>
<dbReference type="PDBsum" id="7ZQ5"/>
<dbReference type="PDBsum" id="7ZQ6"/>
<dbReference type="PDBsum" id="7ZTA"/>
<dbReference type="PDBsum" id="8A3L"/>
<dbReference type="PDBsum" id="8AKN"/>
<dbReference type="PDBsum" id="8AM9"/>
<dbReference type="PDBsum" id="8ANA"/>
<dbReference type="PDBsum" id="8AP4"/>
<dbReference type="PDBsum" id="8AYE"/>
<dbReference type="PDBsum" id="8B0X"/>
<dbReference type="PDBsum" id="8B7Y"/>
<dbReference type="PDBsum" id="8BF7"/>
<dbReference type="PDBsum" id="8BGE"/>
<dbReference type="PDBsum" id="8BGH"/>
<dbReference type="PDBsum" id="8BH4"/>
<dbReference type="PDBsum" id="8BHJ"/>
<dbReference type="PDBsum" id="8BHL"/>
<dbReference type="PDBsum" id="8BHN"/>
<dbReference type="PDBsum" id="8BHP"/>
<dbReference type="PDBsum" id="8BIL"/>
<dbReference type="PDBsum" id="8BIM"/>
<dbReference type="PDBsum" id="8C8X"/>
<dbReference type="PDBsum" id="8C8Y"/>
<dbReference type="PDBsum" id="8C8Z"/>
<dbReference type="PDBsum" id="8C90"/>
<dbReference type="PDBsum" id="8C94"/>
<dbReference type="PDBsum" id="8C95"/>
<dbReference type="PDBsum" id="8CEU"/>
<dbReference type="PDBsum" id="8CGD"/>
<dbReference type="PDBsum" id="8CGV"/>
<dbReference type="PDBsum" id="8EIU"/>
<dbReference type="PDBsum" id="8EKC"/>
<dbReference type="PDBsum" id="8EMM"/>
<dbReference type="PDBsum" id="8FIZ"/>
<dbReference type="PDBsum" id="8FTO"/>
<dbReference type="PDBsum" id="8FZD"/>
<dbReference type="PDBsum" id="8FZE"/>
<dbReference type="PDBsum" id="8FZF"/>
<dbReference type="PDBsum" id="8FZG"/>
<dbReference type="PDBsum" id="8FZH"/>
<dbReference type="PDBsum" id="8FZI"/>
<dbReference type="PDBsum" id="8FZJ"/>
<dbReference type="PDBsum" id="8G2U"/>
<dbReference type="PDBsum" id="8G31"/>
<dbReference type="PDBsum" id="8G34"/>
<dbReference type="PDBsum" id="8G38"/>
<dbReference type="PDBsum" id="8G6W"/>
<dbReference type="PDBsum" id="8G6X"/>
<dbReference type="PDBsum" id="8G6Y"/>
<dbReference type="PDBsum" id="8G7P"/>
<dbReference type="PDBsum" id="8G7Q"/>
<dbReference type="PDBsum" id="8G7R"/>
<dbReference type="PDBsum" id="8G7S"/>
<dbReference type="PDBsum" id="8HSP"/>
<dbReference type="PDBsum" id="8HTZ"/>
<dbReference type="PDBsum" id="8HU1"/>
<dbReference type="PDBsum" id="8IFB"/>
<dbReference type="PDBsum" id="8IFC"/>
<dbReference type="PDBsum" id="8J1Z"/>
<dbReference type="PDBsum" id="8P16"/>
<dbReference type="PDBsum" id="8P17"/>
<dbReference type="PDBsum" id="8P18"/>
<dbReference type="PDBsum" id="8PEG"/>
<dbReference type="PDBsum" id="8PHJ"/>
<dbReference type="PDBsum" id="8PKL"/>
<dbReference type="PDBsum" id="8PVA"/>
<dbReference type="PDBsum" id="8Q4F"/>
<dbReference type="PDBsum" id="8QBT"/>
<dbReference type="PDBsum" id="8QK7"/>
<dbReference type="PDBsum" id="8QOA"/>
<dbReference type="PDBsum" id="8R3V"/>
<dbReference type="PDBsum" id="8R6C"/>
<dbReference type="PDBsum" id="8R8M"/>
<dbReference type="PDBsum" id="8RCL"/>
<dbReference type="PDBsum" id="8RCM"/>
<dbReference type="PDBsum" id="8RCS"/>
<dbReference type="PDBsum" id="8RCT"/>
<dbReference type="PDBsum" id="8RPY"/>
<dbReference type="PDBsum" id="8RPZ"/>
<dbReference type="PDBsum" id="8RQ0"/>
<dbReference type="PDBsum" id="8RQ2"/>
<dbReference type="PDBsum" id="8SYL"/>
<dbReference type="PDBsum" id="8T5D"/>
<dbReference type="PDBsum" id="8T5H"/>
<dbReference type="PDBsum" id="8VS9"/>
<dbReference type="PDBsum" id="8VSA"/>
<dbReference type="PDBsum" id="8W51"/>
<dbReference type="PDBsum" id="8YUO"/>
<dbReference type="PDBsum" id="8YUP"/>
<dbReference type="PDBsum" id="8YUQ"/>
<dbReference type="PDBsum" id="8YUR"/>
<dbReference type="PDBsum" id="8YUS"/>
<dbReference type="PDBsum" id="9D89"/>
<dbReference type="PDBsum" id="9FBV"/>
<dbReference type="PDBsum" id="9GFT"/>
<dbReference type="PDBsum" id="9GGR"/>
<dbReference type="PDBsum" id="9H3P"/>
<dbReference type="PDBsum" id="9H3Q"/>
<dbReference type="PDBsum" id="9H3R"/>
<dbReference type="PDBsum" id="9H3S"/>
<dbReference type="PDBsum" id="9H3V"/>
<dbReference type="PDBsum" id="9H3W"/>
<dbReference type="PDBsum" id="9H3X"/>
<dbReference type="PDBsum" id="9H3Y"/>
<dbReference type="PDBsum" id="9H3Z"/>
<dbReference type="PDBsum" id="9HA4"/>
<dbReference type="PDBsum" id="9HA6"/>
<dbReference type="PDBsum" id="9HA7"/>
<dbReference type="PDBsum" id="9MOR"/>
<dbReference type="PDBsum" id="9MQ4"/>
<dbReference type="EMDB" id="EMD-0076"/>
<dbReference type="EMDB" id="EMD-0080"/>
<dbReference type="EMDB" id="EMD-0081"/>
<dbReference type="EMDB" id="EMD-0082"/>
<dbReference type="EMDB" id="EMD-0083"/>
<dbReference type="EMDB" id="EMD-0137"/>
<dbReference type="EMDB" id="EMD-0139"/>
<dbReference type="EMDB" id="EMD-0261"/>
<dbReference type="EMDB" id="EMD-0322"/>
<dbReference type="EMDB" id="EMD-10073"/>
<dbReference type="EMDB" id="EMD-10353"/>
<dbReference type="EMDB" id="EMD-10453"/>
<dbReference type="EMDB" id="EMD-10458"/>
<dbReference type="EMDB" id="EMD-10655"/>
<dbReference type="EMDB" id="EMD-10656"/>
<dbReference type="EMDB" id="EMD-10657"/>
<dbReference type="EMDB" id="EMD-10705"/>
<dbReference type="EMDB" id="EMD-10905"/>
<dbReference type="EMDB" id="EMD-10906"/>
<dbReference type="EMDB" id="EMD-10907"/>
<dbReference type="EMDB" id="EMD-10908"/>
<dbReference type="EMDB" id="EMD-11418"/>
<dbReference type="EMDB" id="EMD-11419"/>
<dbReference type="EMDB" id="EMD-11420"/>
<dbReference type="EMDB" id="EMD-11421"/>
<dbReference type="EMDB" id="EMD-11422"/>
<dbReference type="EMDB" id="EMD-11423"/>
<dbReference type="EMDB" id="EMD-11426"/>
<dbReference type="EMDB" id="EMD-11710"/>
<dbReference type="EMDB" id="EMD-11713"/>
<dbReference type="EMDB" id="EMD-11717"/>
<dbReference type="EMDB" id="EMD-11718"/>
<dbReference type="EMDB" id="EMD-12035"/>
<dbReference type="EMDB" id="EMD-12215"/>
<dbReference type="EMDB" id="EMD-12216"/>
<dbReference type="EMDB" id="EMD-12217"/>
<dbReference type="EMDB" id="EMD-12218"/>
<dbReference type="EMDB" id="EMD-12219"/>
<dbReference type="EMDB" id="EMD-12261"/>
<dbReference type="EMDB" id="EMD-12635"/>
<dbReference type="EMDB" id="EMD-12693"/>
<dbReference type="EMDB" id="EMD-12694"/>
<dbReference type="EMDB" id="EMD-12695"/>
<dbReference type="EMDB" id="EMD-12936"/>
<dbReference type="EMDB" id="EMD-12937"/>
<dbReference type="EMDB" id="EMD-13180"/>
<dbReference type="EMDB" id="EMD-13458"/>
<dbReference type="EMDB" id="EMD-13459"/>
<dbReference type="EMDB" id="EMD-13461"/>
<dbReference type="EMDB" id="EMD-13462"/>
<dbReference type="EMDB" id="EMD-13463"/>
<dbReference type="EMDB" id="EMD-13464"/>
<dbReference type="EMDB" id="EMD-13465"/>
<dbReference type="EMDB" id="EMD-13805"/>
<dbReference type="EMDB" id="EMD-13952"/>
<dbReference type="EMDB" id="EMD-13955"/>
<dbReference type="EMDB" id="EMD-13956"/>
<dbReference type="EMDB" id="EMD-13958"/>
<dbReference type="EMDB" id="EMD-14121"/>
<dbReference type="EMDB" id="EMD-14454"/>
<dbReference type="EMDB" id="EMD-14846"/>
<dbReference type="EMDB" id="EMD-14850"/>
<dbReference type="EMDB" id="EMD-14864"/>
<dbReference type="EMDB" id="EMD-14865"/>
<dbReference type="EMDB" id="EMD-14956"/>
<dbReference type="EMDB" id="EMD-15116"/>
<dbReference type="EMDB" id="EMD-15488"/>
<dbReference type="EMDB" id="EMD-15558"/>
<dbReference type="EMDB" id="EMD-15712"/>
<dbReference type="EMDB" id="EMD-15793"/>
<dbReference type="EMDB" id="EMD-15905"/>
<dbReference type="EMDB" id="EMD-16015"/>
<dbReference type="EMDB" id="EMD-16029"/>
<dbReference type="EMDB" id="EMD-16031"/>
<dbReference type="EMDB" id="EMD-16047"/>
<dbReference type="EMDB" id="EMD-16057"/>
<dbReference type="EMDB" id="EMD-16059"/>
<dbReference type="EMDB" id="EMD-16062"/>
<dbReference type="EMDB" id="EMD-16065"/>
<dbReference type="EMDB" id="EMD-16081"/>
<dbReference type="EMDB" id="EMD-16082"/>
<dbReference type="EMDB" id="EMD-16494"/>
<dbReference type="EMDB" id="EMD-16495"/>
<dbReference type="EMDB" id="EMD-16496"/>
<dbReference type="EMDB" id="EMD-16497"/>
<dbReference type="EMDB" id="EMD-16501"/>
<dbReference type="EMDB" id="EMD-16502"/>
<dbReference type="EMDB" id="EMD-16613"/>
<dbReference type="EMDB" id="EMD-16641"/>
<dbReference type="EMDB" id="EMD-16652"/>
<dbReference type="EMDB" id="EMD-17346"/>
<dbReference type="EMDB" id="EMD-17347"/>
<dbReference type="EMDB" id="EMD-17348"/>
<dbReference type="EMDB" id="EMD-17631"/>
<dbReference type="EMDB" id="EMD-17667"/>
<dbReference type="EMDB" id="EMD-17743"/>
<dbReference type="EMDB" id="EMD-17959"/>
<dbReference type="EMDB" id="EMD-18145"/>
<dbReference type="EMDB" id="EMD-18320"/>
<dbReference type="EMDB" id="EMD-18458"/>
<dbReference type="EMDB" id="EMD-18534"/>
<dbReference type="EMDB" id="EMD-18875"/>
<dbReference type="EMDB" id="EMD-18950"/>
<dbReference type="EMDB" id="EMD-19004"/>
<dbReference type="EMDB" id="EMD-19054"/>
<dbReference type="EMDB" id="EMD-19055"/>
<dbReference type="EMDB" id="EMD-19058"/>
<dbReference type="EMDB" id="EMD-19059"/>
<dbReference type="EMDB" id="EMD-19426"/>
<dbReference type="EMDB" id="EMD-19427"/>
<dbReference type="EMDB" id="EMD-19428"/>
<dbReference type="EMDB" id="EMD-19429"/>
<dbReference type="EMDB" id="EMD-20048"/>
<dbReference type="EMDB" id="EMD-20052"/>
<dbReference type="EMDB" id="EMD-21420"/>
<dbReference type="EMDB" id="EMD-21421"/>
<dbReference type="EMDB" id="EMD-21422"/>
<dbReference type="EMDB" id="EMD-21620"/>
<dbReference type="EMDB" id="EMD-21625"/>
<dbReference type="EMDB" id="EMD-21630"/>
<dbReference type="EMDB" id="EMD-21631"/>
<dbReference type="EMDB" id="EMD-21632"/>
<dbReference type="EMDB" id="EMD-21633"/>
<dbReference type="EMDB" id="EMD-21634"/>
<dbReference type="EMDB" id="EMD-21635"/>
<dbReference type="EMDB" id="EMD-21636"/>
<dbReference type="EMDB" id="EMD-21637"/>
<dbReference type="EMDB" id="EMD-21638"/>
<dbReference type="EMDB" id="EMD-21639"/>
<dbReference type="EMDB" id="EMD-21640"/>
<dbReference type="EMDB" id="EMD-21641"/>
<dbReference type="EMDB" id="EMD-21856"/>
<dbReference type="EMDB" id="EMD-21857"/>
<dbReference type="EMDB" id="EMD-21858"/>
<dbReference type="EMDB" id="EMD-22459"/>
<dbReference type="EMDB" id="EMD-22461"/>
<dbReference type="EMDB" id="EMD-22464"/>
<dbReference type="EMDB" id="EMD-22466"/>
<dbReference type="EMDB" id="EMD-22469"/>
<dbReference type="EMDB" id="EMD-22472"/>
<dbReference type="EMDB" id="EMD-22669"/>
<dbReference type="EMDB" id="EMD-22670"/>
<dbReference type="EMDB" id="EMD-22671"/>
<dbReference type="EMDB" id="EMD-22672"/>
<dbReference type="EMDB" id="EMD-22673"/>
<dbReference type="EMDB" id="EMD-22674"/>
<dbReference type="EMDB" id="EMD-23528"/>
<dbReference type="EMDB" id="EMD-24120"/>
<dbReference type="EMDB" id="EMD-24132"/>
<dbReference type="EMDB" id="EMD-24133"/>
<dbReference type="EMDB" id="EMD-24134"/>
<dbReference type="EMDB" id="EMD-24135"/>
<dbReference type="EMDB" id="EMD-24136"/>
<dbReference type="EMDB" id="EMD-24803"/>
<dbReference type="EMDB" id="EMD-25405"/>
<dbReference type="EMDB" id="EMD-25407"/>
<dbReference type="EMDB" id="EMD-25409"/>
<dbReference type="EMDB" id="EMD-25410"/>
<dbReference type="EMDB" id="EMD-25411"/>
<dbReference type="EMDB" id="EMD-25415"/>
<dbReference type="EMDB" id="EMD-25418"/>
<dbReference type="EMDB" id="EMD-25420"/>
<dbReference type="EMDB" id="EMD-25421"/>
<dbReference type="EMDB" id="EMD-30215"/>
<dbReference type="EMDB" id="EMD-30598"/>
<dbReference type="EMDB" id="EMD-30611"/>
<dbReference type="EMDB" id="EMD-33660"/>
<dbReference type="EMDB" id="EMD-33661"/>
<dbReference type="EMDB" id="EMD-33662"/>
<dbReference type="EMDB" id="EMD-33663"/>
<dbReference type="EMDB" id="EMD-33664"/>
<dbReference type="EMDB" id="EMD-33665"/>
<dbReference type="EMDB" id="EMD-33904"/>
<dbReference type="EMDB" id="EMD-3489"/>
<dbReference type="EMDB" id="EMD-3490"/>
<dbReference type="EMDB" id="EMD-3492"/>
<dbReference type="EMDB" id="EMD-3493"/>
<dbReference type="EMDB" id="EMD-35001"/>
<dbReference type="EMDB" id="EMD-35020"/>
<dbReference type="EMDB" id="EMD-35022"/>
<dbReference type="EMDB" id="EMD-3508"/>
<dbReference type="EMDB" id="EMD-35411"/>
<dbReference type="EMDB" id="EMD-35412"/>
<dbReference type="EMDB" id="EMD-35939"/>
<dbReference type="EMDB" id="EMD-3617"/>
<dbReference type="EMDB" id="EMD-3713"/>
<dbReference type="EMDB" id="EMD-37271"/>
<dbReference type="EMDB" id="EMD-3730"/>
<dbReference type="EMDB" id="EMD-3898"/>
<dbReference type="EMDB" id="EMD-3899"/>
<dbReference type="EMDB" id="EMD-3903"/>
<dbReference type="EMDB" id="EMD-39577"/>
<dbReference type="EMDB" id="EMD-39578"/>
<dbReference type="EMDB" id="EMD-39579"/>
<dbReference type="EMDB" id="EMD-39580"/>
<dbReference type="EMDB" id="EMD-39581"/>
<dbReference type="EMDB" id="EMD-4001"/>
<dbReference type="EMDB" id="EMD-4121"/>
<dbReference type="EMDB" id="EMD-4122"/>
<dbReference type="EMDB" id="EMD-4123"/>
<dbReference type="EMDB" id="EMD-4124"/>
<dbReference type="EMDB" id="EMD-4125"/>
<dbReference type="EMDB" id="EMD-4126"/>
<dbReference type="EMDB" id="EMD-4378"/>
<dbReference type="EMDB" id="EMD-4379"/>
<dbReference type="EMDB" id="EMD-4380"/>
<dbReference type="EMDB" id="EMD-4383"/>
<dbReference type="EMDB" id="EMD-4476"/>
<dbReference type="EMDB" id="EMD-4477"/>
<dbReference type="EMDB" id="EMD-4478"/>
<dbReference type="EMDB" id="EMD-4638"/>
<dbReference type="EMDB" id="EMD-48479"/>
<dbReference type="EMDB" id="EMD-48513"/>
<dbReference type="EMDB" id="EMD-50296"/>
<dbReference type="EMDB" id="EMD-51318"/>
<dbReference type="EMDB" id="EMD-51340"/>
<dbReference type="EMDB" id="EMD-51833"/>
<dbReference type="EMDB" id="EMD-51834"/>
<dbReference type="EMDB" id="EMD-51835"/>
<dbReference type="EMDB" id="EMD-51836"/>
<dbReference type="EMDB" id="EMD-51839"/>
<dbReference type="EMDB" id="EMD-51840"/>
<dbReference type="EMDB" id="EMD-51841"/>
<dbReference type="EMDB" id="EMD-51842"/>
<dbReference type="EMDB" id="EMD-51843"/>
<dbReference type="EMDB" id="EMD-51976"/>
<dbReference type="EMDB" id="EMD-51978"/>
<dbReference type="EMDB" id="EMD-51979"/>
<dbReference type="EMDB" id="EMD-6667"/>
<dbReference type="EMDB" id="EMD-7289"/>
<dbReference type="EMDB" id="EMD-7341"/>
<dbReference type="EMDB" id="EMD-8000"/>
<dbReference type="EMDB" id="EMD-8001"/>
<dbReference type="EMDB" id="EMD-8002"/>
<dbReference type="EMDB" id="EMD-8003"/>
<dbReference type="EMDB" id="EMD-8004"/>
<dbReference type="EMDB" id="EMD-8107"/>
<dbReference type="EMDB" id="EMD-8175"/>
<dbReference type="EMDB" id="EMD-8176"/>
<dbReference type="EMDB" id="EMD-8237"/>
<dbReference type="EMDB" id="EMD-8238"/>
<dbReference type="EMDB" id="EMD-8279"/>
<dbReference type="EMDB" id="EMD-8280"/>
<dbReference type="EMDB" id="EMD-8281"/>
<dbReference type="EMDB" id="EMD-8282"/>
<dbReference type="EMDB" id="EMD-8505"/>
<dbReference type="EMDB" id="EMD-8615"/>
<dbReference type="EMDB" id="EMD-8616"/>
<dbReference type="EMDB" id="EMD-8617"/>
<dbReference type="EMDB" id="EMD-8618"/>
<dbReference type="EMDB" id="EMD-8619"/>
<dbReference type="EMDB" id="EMD-8620"/>
<dbReference type="EMDB" id="EMD-8813"/>
<dbReference type="EMDB" id="EMD-8814"/>
<dbReference type="EMDB" id="EMD-8815"/>
<dbReference type="EMDB" id="EMD-8828"/>
<dbReference type="SMR" id="P0C018"/>
<dbReference type="BioGRID" id="4263396">
    <property type="interactions" value="12"/>
</dbReference>
<dbReference type="BioGRID" id="852116">
    <property type="interactions" value="4"/>
</dbReference>
<dbReference type="ComplexPortal" id="CPX-3807">
    <property type="entry name" value="50S large ribosomal subunit"/>
</dbReference>
<dbReference type="DIP" id="DIP-47908N"/>
<dbReference type="FunCoup" id="P0C018">
    <property type="interactions" value="950"/>
</dbReference>
<dbReference type="IntAct" id="P0C018">
    <property type="interactions" value="51"/>
</dbReference>
<dbReference type="STRING" id="511145.b3304"/>
<dbReference type="jPOST" id="P0C018"/>
<dbReference type="PaxDb" id="511145-b3304"/>
<dbReference type="EnsemblBacteria" id="AAC76329">
    <property type="protein sequence ID" value="AAC76329"/>
    <property type="gene ID" value="b3304"/>
</dbReference>
<dbReference type="GeneID" id="947804"/>
<dbReference type="GeneID" id="98390426"/>
<dbReference type="KEGG" id="ecj:JW3266"/>
<dbReference type="KEGG" id="eco:b3304"/>
<dbReference type="KEGG" id="ecoc:C3026_17960"/>
<dbReference type="PATRIC" id="fig|1411691.4.peg.3427"/>
<dbReference type="EchoBASE" id="EB0872"/>
<dbReference type="eggNOG" id="COG0256">
    <property type="taxonomic scope" value="Bacteria"/>
</dbReference>
<dbReference type="HOGENOM" id="CLU_098841_0_1_6"/>
<dbReference type="InParanoid" id="P0C018"/>
<dbReference type="OMA" id="NKQIYAQ"/>
<dbReference type="OrthoDB" id="9810939at2"/>
<dbReference type="PhylomeDB" id="P0C018"/>
<dbReference type="BioCyc" id="EcoCyc:EG10879-MONOMER"/>
<dbReference type="BioCyc" id="MetaCyc:EG10879-MONOMER"/>
<dbReference type="EvolutionaryTrace" id="P0C018"/>
<dbReference type="PRO" id="PR:P0C018"/>
<dbReference type="Proteomes" id="UP000000625">
    <property type="component" value="Chromosome"/>
</dbReference>
<dbReference type="GO" id="GO:0005737">
    <property type="term" value="C:cytoplasm"/>
    <property type="evidence" value="ECO:0000314"/>
    <property type="project" value="ComplexPortal"/>
</dbReference>
<dbReference type="GO" id="GO:0005829">
    <property type="term" value="C:cytosol"/>
    <property type="evidence" value="ECO:0000314"/>
    <property type="project" value="EcoCyc"/>
</dbReference>
<dbReference type="GO" id="GO:0022625">
    <property type="term" value="C:cytosolic large ribosomal subunit"/>
    <property type="evidence" value="ECO:0000314"/>
    <property type="project" value="EcoCyc"/>
</dbReference>
<dbReference type="GO" id="GO:0008097">
    <property type="term" value="F:5S rRNA binding"/>
    <property type="evidence" value="ECO:0000314"/>
    <property type="project" value="EcoCyc"/>
</dbReference>
<dbReference type="GO" id="GO:0003735">
    <property type="term" value="F:structural constituent of ribosome"/>
    <property type="evidence" value="ECO:0007669"/>
    <property type="project" value="InterPro"/>
</dbReference>
<dbReference type="GO" id="GO:0002181">
    <property type="term" value="P:cytoplasmic translation"/>
    <property type="evidence" value="ECO:0000303"/>
    <property type="project" value="ComplexPortal"/>
</dbReference>
<dbReference type="CDD" id="cd00432">
    <property type="entry name" value="Ribosomal_L18_L5e"/>
    <property type="match status" value="1"/>
</dbReference>
<dbReference type="FunFam" id="3.30.420.100:FF:000001">
    <property type="entry name" value="50S ribosomal protein L18"/>
    <property type="match status" value="1"/>
</dbReference>
<dbReference type="Gene3D" id="3.30.420.100">
    <property type="match status" value="1"/>
</dbReference>
<dbReference type="HAMAP" id="MF_01337_B">
    <property type="entry name" value="Ribosomal_uL18_B"/>
    <property type="match status" value="1"/>
</dbReference>
<dbReference type="InterPro" id="IPR004389">
    <property type="entry name" value="Ribosomal_uL18_bac-type"/>
</dbReference>
<dbReference type="InterPro" id="IPR005484">
    <property type="entry name" value="Ribosomal_uL18_bac/euk"/>
</dbReference>
<dbReference type="NCBIfam" id="TIGR00060">
    <property type="entry name" value="L18_bact"/>
    <property type="match status" value="1"/>
</dbReference>
<dbReference type="PANTHER" id="PTHR12899">
    <property type="entry name" value="39S RIBOSOMAL PROTEIN L18, MITOCHONDRIAL"/>
    <property type="match status" value="1"/>
</dbReference>
<dbReference type="PANTHER" id="PTHR12899:SF3">
    <property type="entry name" value="LARGE RIBOSOMAL SUBUNIT PROTEIN UL18M"/>
    <property type="match status" value="1"/>
</dbReference>
<dbReference type="Pfam" id="PF00861">
    <property type="entry name" value="Ribosomal_L18p"/>
    <property type="match status" value="1"/>
</dbReference>
<dbReference type="SUPFAM" id="SSF53137">
    <property type="entry name" value="Translational machinery components"/>
    <property type="match status" value="1"/>
</dbReference>
<name>RL18_ECOLI</name>
<accession>P0C018</accession>
<accession>P02419</accession>
<accession>Q2M6W9</accession>
<sequence length="117" mass="12770">MDKKSARIRRATRARRKLQELGATRLVVHRTPRHIYAQVIAPNGSEVLVAASTVEKAIAEQLKYTGNKDAAAAVGKAVAERALEKGIKDVSFDRSGFQYHGRVQALADAAREAGLQF</sequence>
<comment type="function">
    <text evidence="3 12 13 14 15">This is one of the proteins that mediates the attachment of the 5S rRNA subcomplex onto the large ribosomal subunit where it forms part of the central protuberance. Binds stably to 5S rRNA; increases binding abilities of L5 in a cooperative fashion; both proteins together confer 23S rRNA binding. The 5S rRNA and some of its associated proteins might help stabilize positioning of ribosome-bound tRNAs.</text>
</comment>
<comment type="subunit">
    <text evidence="1 3 4 5 6 7 8 9 10 11 12 13 14 15 16">Part of the 50S ribosomal subunit (PubMed:1098937, PubMed:10094780, PubMed:12809609, PubMed:16272117, PubMed:25310980, PubMed:24844575, PubMed:27934701, PubMed:27906160, PubMed:27906161); part of the 5S rRNA/L5/L18/L25 subcomplex (PubMed:109811, PubMed:353728, PubMed:354687, PubMed:6159586, PubMed:7038683, PubMed:8925931). Contacts the 5S and 23S rRNAs.</text>
</comment>
<comment type="domain">
    <text evidence="12">The basic N-terminus is not necessary for binding to 5S rRNA. It is however required for cooperative binding of L5 and L18 to 5S rRNA as well as for binding of the 5S rRNA/L5/L18 complex to the 23S rRNA.</text>
</comment>
<comment type="PTM">
    <text evidence="2">The protein has been shown to contain a phosphoserine, which was required for the protein to bind to 5S rRNA (PubMed:10529214). However, the presence of this phosphoserine is controversial, and it has not been seen by mass spectrometry.</text>
</comment>
<comment type="mass spectrometry" mass="12769.8" method="MALDI" evidence="1"/>
<comment type="similarity">
    <text evidence="18">Belongs to the universal ribosomal protein uL18 family.</text>
</comment>
<proteinExistence type="evidence at protein level"/>
<organism>
    <name type="scientific">Escherichia coli (strain K12)</name>
    <dbReference type="NCBI Taxonomy" id="83333"/>
    <lineage>
        <taxon>Bacteria</taxon>
        <taxon>Pseudomonadati</taxon>
        <taxon>Pseudomonadota</taxon>
        <taxon>Gammaproteobacteria</taxon>
        <taxon>Enterobacterales</taxon>
        <taxon>Enterobacteriaceae</taxon>
        <taxon>Escherichia</taxon>
    </lineage>
</organism>
<gene>
    <name type="primary">rplR</name>
    <name type="ordered locus">b3304</name>
    <name type="ordered locus">JW3266</name>
</gene>